<organism>
    <name type="scientific">Rattus norvegicus</name>
    <name type="common">Rat</name>
    <dbReference type="NCBI Taxonomy" id="10116"/>
    <lineage>
        <taxon>Eukaryota</taxon>
        <taxon>Metazoa</taxon>
        <taxon>Chordata</taxon>
        <taxon>Craniata</taxon>
        <taxon>Vertebrata</taxon>
        <taxon>Euteleostomi</taxon>
        <taxon>Mammalia</taxon>
        <taxon>Eutheria</taxon>
        <taxon>Euarchontoglires</taxon>
        <taxon>Glires</taxon>
        <taxon>Rodentia</taxon>
        <taxon>Myomorpha</taxon>
        <taxon>Muroidea</taxon>
        <taxon>Muridae</taxon>
        <taxon>Murinae</taxon>
        <taxon>Rattus</taxon>
    </lineage>
</organism>
<accession>P19491</accession>
<accession>Q9R174</accession>
<protein>
    <recommendedName>
        <fullName evidence="46">Glutamate receptor 2</fullName>
        <shortName>GluR-2</shortName>
    </recommendedName>
    <alternativeName>
        <fullName>AMPA-selective glutamate receptor 2</fullName>
    </alternativeName>
    <alternativeName>
        <fullName>GluR-B</fullName>
    </alternativeName>
    <alternativeName>
        <fullName>GluR-K2</fullName>
    </alternativeName>
    <alternativeName>
        <fullName>Glutamate receptor ionotropic, AMPA 2</fullName>
    </alternativeName>
</protein>
<feature type="signal peptide" evidence="4">
    <location>
        <begin position="1"/>
        <end position="21"/>
    </location>
</feature>
<feature type="chain" id="PRO_0000011535" description="Glutamate receptor 2">
    <location>
        <begin position="22"/>
        <end position="883"/>
    </location>
</feature>
<feature type="topological domain" description="Extracellular">
    <location>
        <begin position="22"/>
        <end position="543"/>
    </location>
</feature>
<feature type="transmembrane region" description="Helical">
    <location>
        <begin position="544"/>
        <end position="564"/>
    </location>
</feature>
<feature type="topological domain" description="Cytoplasmic">
    <location>
        <begin position="565"/>
        <end position="591"/>
    </location>
</feature>
<feature type="intramembrane region" description="Helical; Pore-forming">
    <location>
        <begin position="592"/>
        <end position="607"/>
    </location>
</feature>
<feature type="intramembrane region">
    <location>
        <begin position="608"/>
        <end position="610"/>
    </location>
</feature>
<feature type="topological domain" description="Cytoplasmic">
    <location>
        <begin position="611"/>
        <end position="616"/>
    </location>
</feature>
<feature type="transmembrane region" description="Helical">
    <location>
        <begin position="617"/>
        <end position="637"/>
    </location>
</feature>
<feature type="topological domain" description="Extracellular">
    <location>
        <begin position="638"/>
        <end position="812"/>
    </location>
</feature>
<feature type="transmembrane region" description="Helical; Name=M4">
    <location>
        <begin position="813"/>
        <end position="833"/>
    </location>
</feature>
<feature type="topological domain" description="Cytoplasmic">
    <location>
        <begin position="834"/>
        <end position="883"/>
    </location>
</feature>
<feature type="region of interest" description="Required for interaction with IQSEC1" evidence="29">
    <location>
        <begin position="867"/>
        <end position="877"/>
    </location>
</feature>
<feature type="binding site" evidence="7 19 50 81">
    <location>
        <position position="499"/>
    </location>
    <ligand>
        <name>L-glutamate</name>
        <dbReference type="ChEBI" id="CHEBI:29985"/>
    </ligand>
</feature>
<feature type="binding site" evidence="7 19 50 81">
    <location>
        <position position="501"/>
    </location>
    <ligand>
        <name>L-glutamate</name>
        <dbReference type="ChEBI" id="CHEBI:29985"/>
    </ligand>
</feature>
<feature type="binding site" evidence="7 19 50 81">
    <location>
        <position position="506"/>
    </location>
    <ligand>
        <name>L-glutamate</name>
        <dbReference type="ChEBI" id="CHEBI:29985"/>
    </ligand>
</feature>
<feature type="binding site" evidence="7 19 50 81">
    <location>
        <position position="675"/>
    </location>
    <ligand>
        <name>L-glutamate</name>
        <dbReference type="ChEBI" id="CHEBI:29985"/>
    </ligand>
</feature>
<feature type="binding site" evidence="7 19 50 81">
    <location>
        <position position="676"/>
    </location>
    <ligand>
        <name>L-glutamate</name>
        <dbReference type="ChEBI" id="CHEBI:29985"/>
    </ligand>
</feature>
<feature type="binding site" evidence="7 19 50 81">
    <location>
        <position position="726"/>
    </location>
    <ligand>
        <name>L-glutamate</name>
        <dbReference type="ChEBI" id="CHEBI:29985"/>
    </ligand>
</feature>
<feature type="site" description="Interaction with the cone snail toxin Con-ikot-ikot" evidence="35">
    <location>
        <position position="474"/>
    </location>
</feature>
<feature type="site" description="Crucial to convey clamshell closure to channel opening" evidence="35">
    <location>
        <position position="654"/>
    </location>
</feature>
<feature type="site" description="Interaction with the cone snail toxin Con-ikot-ikot" evidence="35">
    <location>
        <position position="681"/>
    </location>
</feature>
<feature type="site" description="Interaction with the cone snail toxin Con-ikot-ikot" evidence="35">
    <location>
        <position position="773"/>
    </location>
</feature>
<feature type="modified residue" description="Phosphoserine; by PKC" evidence="37">
    <location>
        <position position="683"/>
    </location>
</feature>
<feature type="modified residue" description="Phosphoserine; by PKG" evidence="37">
    <location>
        <position position="717"/>
    </location>
</feature>
<feature type="modified residue" description="Phosphoserine" evidence="2">
    <location>
        <position position="860"/>
    </location>
</feature>
<feature type="modified residue" description="Phosphoserine" evidence="2">
    <location>
        <position position="863"/>
    </location>
</feature>
<feature type="modified residue" description="Phosphotyrosine" evidence="15 29">
    <location>
        <position position="876"/>
    </location>
</feature>
<feature type="modified residue" description="Phosphoserine" evidence="2">
    <location>
        <position position="880"/>
    </location>
</feature>
<feature type="lipid moiety-binding region" description="S-palmitoyl cysteine" evidence="1">
    <location>
        <position position="610"/>
    </location>
</feature>
<feature type="lipid moiety-binding region" description="S-palmitoyl cysteine" evidence="1">
    <location>
        <position position="836"/>
    </location>
</feature>
<feature type="glycosylation site" description="N-linked (GlcNAc...) asparagine" evidence="31">
    <location>
        <position position="256"/>
    </location>
</feature>
<feature type="glycosylation site" description="N-linked (GlcNAc...) asparagine" evidence="28 31 35">
    <location>
        <position position="370"/>
    </location>
</feature>
<feature type="glycosylation site" description="N-linked (GlcNAc...) asparagine" evidence="4">
    <location>
        <position position="406"/>
    </location>
</feature>
<feature type="glycosylation site" description="N-linked (GlcNAc...) asparagine" evidence="4">
    <location>
        <position position="413"/>
    </location>
</feature>
<feature type="disulfide bond" evidence="3">
    <location>
        <begin position="78"/>
        <end position="330"/>
    </location>
</feature>
<feature type="disulfide bond" evidence="7 51">
    <location>
        <begin position="739"/>
        <end position="794"/>
    </location>
</feature>
<feature type="splice variant" id="VSP_000111" description="In isoform Flip." evidence="41 43 45">
    <original>NA</original>
    <variation>TP</variation>
    <location>
        <begin position="765"/>
        <end position="766"/>
    </location>
</feature>
<feature type="splice variant" id="VSP_000112" description="In isoform Flip." evidence="41 43 45">
    <original>N</original>
    <variation>S</variation>
    <location>
        <position position="775"/>
    </location>
</feature>
<feature type="splice variant" id="VSP_000113" description="In isoform Flip." evidence="41 43 45">
    <original>L</original>
    <variation>V</variation>
    <location>
        <position position="779"/>
    </location>
</feature>
<feature type="splice variant" id="VSP_000114" description="In isoform Flip." evidence="41 43 45">
    <original>SGGGD</original>
    <variation>AKDSG</variation>
    <location>
        <begin position="796"/>
        <end position="800"/>
    </location>
</feature>
<feature type="splice variant" id="VSP_029310" description="In isoform 3." evidence="46">
    <original>VAKNPQNINPSSSQNSQNFATYKEGYNVYGIESVKI</original>
    <variation>MTLSDVMRSKARLSITGSTGENGRVMTPEFPKAVHAVPYVSPGMGMNVSVTDLS</variation>
    <location>
        <begin position="848"/>
        <end position="883"/>
    </location>
</feature>
<feature type="sequence variant" description="In RNA edited version.">
    <original>Q</original>
    <variation>R</variation>
    <location>
        <position position="607"/>
    </location>
</feature>
<feature type="mutagenesis site" description="Promotes dimerization. Strongly reduced desensitization." evidence="9">
    <original>L</original>
    <variation>Y</variation>
    <location>
        <position position="504"/>
    </location>
</feature>
<feature type="mutagenesis site" description="Increases rate of desensitization." evidence="9">
    <original>N</original>
    <variation>D</variation>
    <location>
        <position position="775"/>
    </location>
</feature>
<feature type="mutagenesis site" description="Strongly reduces interaction with NSF." evidence="40">
    <original>NP</original>
    <variation>AA</variation>
    <location>
        <begin position="851"/>
        <end position="852"/>
    </location>
</feature>
<feature type="mutagenesis site" description="Almost abolishes interaction with IQSEC1; when associated with V-876. Abolishes activation of ARF6 by IQSEC1; when associated with V-876." evidence="29">
    <original>V</original>
    <variation>Y</variation>
    <location>
        <position position="875"/>
    </location>
</feature>
<feature type="mutagenesis site" description="Strongly decreases interaction with IQSEC1. Abolishes activation of ARF6 by IQSEC1." evidence="29">
    <original>Y</original>
    <variation>A</variation>
    <location>
        <position position="876"/>
    </location>
</feature>
<feature type="mutagenesis site" description="No effect on interaction with IQSEC1." evidence="29">
    <original>Y</original>
    <variation>F</variation>
    <location>
        <position position="876"/>
    </location>
</feature>
<feature type="mutagenesis site" description="Almost abolishes interaction with IQSEC1; when associated with Y-875. Abolishes activation of ARF6 by IQSEC1; when associated with Y-875." evidence="29">
    <original>Y</original>
    <variation>V</variation>
    <location>
        <position position="876"/>
    </location>
</feature>
<feature type="strand" evidence="102">
    <location>
        <begin position="26"/>
        <end position="34"/>
    </location>
</feature>
<feature type="helix" evidence="102">
    <location>
        <begin position="38"/>
        <end position="50"/>
    </location>
</feature>
<feature type="strand" evidence="102">
    <location>
        <begin position="57"/>
        <end position="65"/>
    </location>
</feature>
<feature type="helix" evidence="102">
    <location>
        <begin position="70"/>
        <end position="82"/>
    </location>
</feature>
<feature type="strand" evidence="102">
    <location>
        <begin position="86"/>
        <end position="90"/>
    </location>
</feature>
<feature type="turn" evidence="102">
    <location>
        <begin position="94"/>
        <end position="96"/>
    </location>
</feature>
<feature type="helix" evidence="102">
    <location>
        <begin position="97"/>
        <end position="107"/>
    </location>
</feature>
<feature type="strand" evidence="102">
    <location>
        <begin position="110"/>
        <end position="113"/>
    </location>
</feature>
<feature type="strand" evidence="102">
    <location>
        <begin position="125"/>
        <end position="127"/>
    </location>
</feature>
<feature type="helix" evidence="102">
    <location>
        <begin position="133"/>
        <end position="142"/>
    </location>
</feature>
<feature type="strand" evidence="102">
    <location>
        <begin position="147"/>
        <end position="152"/>
    </location>
</feature>
<feature type="turn" evidence="107">
    <location>
        <begin position="154"/>
        <end position="156"/>
    </location>
</feature>
<feature type="helix" evidence="102">
    <location>
        <begin position="159"/>
        <end position="171"/>
    </location>
</feature>
<feature type="strand" evidence="102">
    <location>
        <begin position="174"/>
        <end position="179"/>
    </location>
</feature>
<feature type="strand" evidence="103">
    <location>
        <begin position="182"/>
        <end position="185"/>
    </location>
</feature>
<feature type="helix" evidence="102">
    <location>
        <begin position="188"/>
        <end position="199"/>
    </location>
</feature>
<feature type="turn" evidence="101">
    <location>
        <begin position="201"/>
        <end position="203"/>
    </location>
</feature>
<feature type="strand" evidence="102">
    <location>
        <begin position="206"/>
        <end position="211"/>
    </location>
</feature>
<feature type="helix" evidence="102">
    <location>
        <begin position="213"/>
        <end position="226"/>
    </location>
</feature>
<feature type="turn" evidence="110">
    <location>
        <begin position="227"/>
        <end position="229"/>
    </location>
</feature>
<feature type="helix" evidence="102">
    <location>
        <begin position="230"/>
        <end position="232"/>
    </location>
</feature>
<feature type="strand" evidence="102">
    <location>
        <begin position="234"/>
        <end position="237"/>
    </location>
</feature>
<feature type="strand" evidence="102">
    <location>
        <begin position="239"/>
        <end position="241"/>
    </location>
</feature>
<feature type="helix" evidence="107">
    <location>
        <begin position="242"/>
        <end position="244"/>
    </location>
</feature>
<feature type="helix" evidence="102">
    <location>
        <begin position="247"/>
        <end position="249"/>
    </location>
</feature>
<feature type="strand" evidence="107">
    <location>
        <begin position="251"/>
        <end position="254"/>
    </location>
</feature>
<feature type="strand" evidence="102">
    <location>
        <begin position="256"/>
        <end position="262"/>
    </location>
</feature>
<feature type="strand" evidence="117">
    <location>
        <begin position="265"/>
        <end position="267"/>
    </location>
</feature>
<feature type="helix" evidence="102">
    <location>
        <begin position="268"/>
        <end position="277"/>
    </location>
</feature>
<feature type="turn" evidence="102">
    <location>
        <begin position="282"/>
        <end position="284"/>
    </location>
</feature>
<feature type="strand" evidence="107">
    <location>
        <begin position="289"/>
        <end position="291"/>
    </location>
</feature>
<feature type="helix" evidence="102">
    <location>
        <begin position="295"/>
        <end position="316"/>
    </location>
</feature>
<feature type="turn" evidence="108">
    <location>
        <begin position="330"/>
        <end position="332"/>
    </location>
</feature>
<feature type="helix" evidence="102">
    <location>
        <begin position="339"/>
        <end position="350"/>
    </location>
</feature>
<feature type="strand" evidence="102">
    <location>
        <begin position="353"/>
        <end position="355"/>
    </location>
</feature>
<feature type="strand" evidence="102">
    <location>
        <begin position="358"/>
        <end position="360"/>
    </location>
</feature>
<feature type="strand" evidence="102">
    <location>
        <begin position="366"/>
        <end position="368"/>
    </location>
</feature>
<feature type="strand" evidence="102">
    <location>
        <begin position="372"/>
        <end position="379"/>
    </location>
</feature>
<feature type="strand" evidence="102">
    <location>
        <begin position="382"/>
        <end position="390"/>
    </location>
</feature>
<feature type="turn" evidence="102">
    <location>
        <begin position="391"/>
        <end position="393"/>
    </location>
</feature>
<feature type="strand" evidence="102">
    <location>
        <begin position="394"/>
        <end position="397"/>
    </location>
</feature>
<feature type="turn" evidence="117">
    <location>
        <begin position="409"/>
        <end position="411"/>
    </location>
</feature>
<feature type="strand" evidence="113">
    <location>
        <begin position="416"/>
        <end position="420"/>
    </location>
</feature>
<feature type="turn" evidence="113">
    <location>
        <begin position="424"/>
        <end position="426"/>
    </location>
</feature>
<feature type="strand" evidence="113">
    <location>
        <begin position="427"/>
        <end position="429"/>
    </location>
</feature>
<feature type="turn" evidence="115">
    <location>
        <begin position="430"/>
        <end position="432"/>
    </location>
</feature>
<feature type="helix" evidence="113">
    <location>
        <begin position="433"/>
        <end position="435"/>
    </location>
</feature>
<feature type="helix" evidence="113">
    <location>
        <begin position="438"/>
        <end position="441"/>
    </location>
</feature>
<feature type="strand" evidence="113">
    <location>
        <begin position="442"/>
        <end position="444"/>
    </location>
</feature>
<feature type="helix" evidence="113">
    <location>
        <begin position="445"/>
        <end position="457"/>
    </location>
</feature>
<feature type="strand" evidence="113">
    <location>
        <begin position="461"/>
        <end position="465"/>
    </location>
</feature>
<feature type="strand" evidence="115">
    <location>
        <begin position="467"/>
        <end position="469"/>
    </location>
</feature>
<feature type="strand" evidence="100">
    <location>
        <begin position="472"/>
        <end position="474"/>
    </location>
</feature>
<feature type="turn" evidence="113">
    <location>
        <begin position="476"/>
        <end position="478"/>
    </location>
</feature>
<feature type="strand" evidence="109">
    <location>
        <begin position="479"/>
        <end position="481"/>
    </location>
</feature>
<feature type="helix" evidence="113">
    <location>
        <begin position="483"/>
        <end position="489"/>
    </location>
</feature>
<feature type="strand" evidence="113">
    <location>
        <begin position="494"/>
        <end position="496"/>
    </location>
</feature>
<feature type="helix" evidence="113">
    <location>
        <begin position="504"/>
        <end position="507"/>
    </location>
</feature>
<feature type="strand" evidence="113">
    <location>
        <begin position="510"/>
        <end position="512"/>
    </location>
</feature>
<feature type="strand" evidence="113">
    <location>
        <begin position="516"/>
        <end position="519"/>
    </location>
</feature>
<feature type="strand" evidence="113">
    <location>
        <begin position="521"/>
        <end position="526"/>
    </location>
</feature>
<feature type="helix" evidence="116">
    <location>
        <begin position="537"/>
        <end position="539"/>
    </location>
</feature>
<feature type="strand" evidence="111">
    <location>
        <begin position="540"/>
        <end position="542"/>
    </location>
</feature>
<feature type="helix" evidence="116">
    <location>
        <begin position="544"/>
        <end position="566"/>
    </location>
</feature>
<feature type="helix" evidence="116">
    <location>
        <begin position="569"/>
        <end position="571"/>
    </location>
</feature>
<feature type="strand" evidence="116">
    <location>
        <begin position="587"/>
        <end position="590"/>
    </location>
</feature>
<feature type="helix" evidence="116">
    <location>
        <begin position="594"/>
        <end position="605"/>
    </location>
</feature>
<feature type="helix" evidence="116">
    <location>
        <begin position="617"/>
        <end position="645"/>
    </location>
</feature>
<feature type="helix" evidence="104">
    <location>
        <begin position="653"/>
        <end position="655"/>
    </location>
</feature>
<feature type="helix" evidence="113">
    <location>
        <begin position="657"/>
        <end position="661"/>
    </location>
</feature>
<feature type="strand" evidence="113">
    <location>
        <begin position="664"/>
        <end position="669"/>
    </location>
</feature>
<feature type="strand" evidence="113">
    <location>
        <begin position="671"/>
        <end position="674"/>
    </location>
</feature>
<feature type="helix" evidence="113">
    <location>
        <begin position="675"/>
        <end position="682"/>
    </location>
</feature>
<feature type="helix" evidence="113">
    <location>
        <begin position="686"/>
        <end position="697"/>
    </location>
</feature>
<feature type="turn" evidence="114">
    <location>
        <begin position="699"/>
        <end position="701"/>
    </location>
</feature>
<feature type="strand" evidence="113">
    <location>
        <begin position="704"/>
        <end position="706"/>
    </location>
</feature>
<feature type="helix" evidence="113">
    <location>
        <begin position="707"/>
        <end position="716"/>
    </location>
</feature>
<feature type="turn" evidence="113">
    <location>
        <begin position="717"/>
        <end position="719"/>
    </location>
</feature>
<feature type="strand" evidence="113">
    <location>
        <begin position="720"/>
        <end position="726"/>
    </location>
</feature>
<feature type="helix" evidence="113">
    <location>
        <begin position="727"/>
        <end position="734"/>
    </location>
</feature>
<feature type="strand" evidence="106">
    <location>
        <begin position="736"/>
        <end position="738"/>
    </location>
</feature>
<feature type="strand" evidence="113">
    <location>
        <begin position="741"/>
        <end position="745"/>
    </location>
</feature>
<feature type="strand" evidence="113">
    <location>
        <begin position="751"/>
        <end position="753"/>
    </location>
</feature>
<feature type="strand" evidence="113">
    <location>
        <begin position="756"/>
        <end position="758"/>
    </location>
</feature>
<feature type="helix" evidence="113">
    <location>
        <begin position="763"/>
        <end position="776"/>
    </location>
</feature>
<feature type="helix" evidence="113">
    <location>
        <begin position="779"/>
        <end position="788"/>
    </location>
</feature>
<feature type="turn" evidence="113">
    <location>
        <begin position="789"/>
        <end position="791"/>
    </location>
</feature>
<feature type="strand" evidence="112">
    <location>
        <begin position="793"/>
        <end position="795"/>
    </location>
</feature>
<feature type="strand" evidence="105">
    <location>
        <begin position="800"/>
        <end position="803"/>
    </location>
</feature>
<feature type="helix" evidence="116">
    <location>
        <begin position="810"/>
        <end position="812"/>
    </location>
</feature>
<feature type="helix" evidence="116">
    <location>
        <begin position="814"/>
        <end position="846"/>
    </location>
</feature>
<dbReference type="EMBL" id="M36419">
    <property type="protein sequence ID" value="AAA41244.1"/>
    <property type="molecule type" value="mRNA"/>
</dbReference>
<dbReference type="EMBL" id="M38061">
    <property type="protein sequence ID" value="AAC37652.1"/>
    <property type="molecule type" value="mRNA"/>
</dbReference>
<dbReference type="EMBL" id="M85035">
    <property type="protein sequence ID" value="AAA41240.1"/>
    <property type="molecule type" value="mRNA"/>
</dbReference>
<dbReference type="EMBL" id="X54655">
    <property type="protein sequence ID" value="CAA38465.1"/>
    <property type="molecule type" value="mRNA"/>
</dbReference>
<dbReference type="EMBL" id="AF164344">
    <property type="protein sequence ID" value="AAD51284.1"/>
    <property type="molecule type" value="mRNA"/>
</dbReference>
<dbReference type="PIR" id="S13677">
    <property type="entry name" value="S13677"/>
</dbReference>
<dbReference type="RefSeq" id="NP_001077280.1">
    <property type="nucleotide sequence ID" value="NM_001083811.1"/>
</dbReference>
<dbReference type="RefSeq" id="NP_058957.1">
    <property type="nucleotide sequence ID" value="NM_017261.2"/>
</dbReference>
<dbReference type="PDB" id="1FTJ">
    <property type="method" value="X-ray"/>
    <property type="resolution" value="1.90 A"/>
    <property type="chains" value="A/B/C=413-527, A/B/C=653-796"/>
</dbReference>
<dbReference type="PDB" id="1FTK">
    <property type="method" value="X-ray"/>
    <property type="resolution" value="1.60 A"/>
    <property type="chains" value="A=404-528, A=653-796"/>
</dbReference>
<dbReference type="PDB" id="1FTL">
    <property type="method" value="X-ray"/>
    <property type="resolution" value="1.80 A"/>
    <property type="chains" value="A/B=413-527, A/B=653-796"/>
</dbReference>
<dbReference type="PDB" id="1FTM">
    <property type="method" value="X-ray"/>
    <property type="resolution" value="1.70 A"/>
    <property type="chains" value="A/B/C=413-527, A/B/C=653-796"/>
</dbReference>
<dbReference type="PDB" id="1FTO">
    <property type="method" value="X-ray"/>
    <property type="resolution" value="2.00 A"/>
    <property type="chains" value="A/B=413-527, A/B=653-796"/>
</dbReference>
<dbReference type="PDB" id="1FW0">
    <property type="method" value="X-ray"/>
    <property type="resolution" value="1.90 A"/>
    <property type="chains" value="A=413-527, A=653-796"/>
</dbReference>
<dbReference type="PDB" id="1GR2">
    <property type="method" value="X-ray"/>
    <property type="resolution" value="1.90 A"/>
    <property type="chains" value="A=404-528, A=652-796"/>
</dbReference>
<dbReference type="PDB" id="1LB8">
    <property type="method" value="X-ray"/>
    <property type="resolution" value="2.30 A"/>
    <property type="chains" value="A/B=413-527, A/B=653-796"/>
</dbReference>
<dbReference type="PDB" id="1LB9">
    <property type="method" value="X-ray"/>
    <property type="resolution" value="2.30 A"/>
    <property type="chains" value="A/B=413-527, A/B=653-796"/>
</dbReference>
<dbReference type="PDB" id="1LBB">
    <property type="method" value="X-ray"/>
    <property type="resolution" value="2.10 A"/>
    <property type="chains" value="A=413-527, A=653-796"/>
</dbReference>
<dbReference type="PDB" id="1LBC">
    <property type="method" value="X-ray"/>
    <property type="resolution" value="1.80 A"/>
    <property type="chains" value="A/B/C=413-527, A/B/C=653-796"/>
</dbReference>
<dbReference type="PDB" id="1M5B">
    <property type="method" value="X-ray"/>
    <property type="resolution" value="1.85 A"/>
    <property type="chains" value="A/B/C=413-527, A/B/C=653-796"/>
</dbReference>
<dbReference type="PDB" id="1M5C">
    <property type="method" value="X-ray"/>
    <property type="resolution" value="1.65 A"/>
    <property type="chains" value="A=413-527, A=653-796"/>
</dbReference>
<dbReference type="PDB" id="1M5D">
    <property type="method" value="X-ray"/>
    <property type="resolution" value="1.73 A"/>
    <property type="chains" value="A=413-527, A=653-796"/>
</dbReference>
<dbReference type="PDB" id="1M5E">
    <property type="method" value="X-ray"/>
    <property type="resolution" value="1.46 A"/>
    <property type="chains" value="A/B/C=413-527, A/B/C=653-796"/>
</dbReference>
<dbReference type="PDB" id="1M5F">
    <property type="method" value="X-ray"/>
    <property type="resolution" value="1.95 A"/>
    <property type="chains" value="A/B/C=413-527, A/B/C=653-796"/>
</dbReference>
<dbReference type="PDB" id="1MM6">
    <property type="method" value="X-ray"/>
    <property type="resolution" value="2.15 A"/>
    <property type="chains" value="A/B=413-527, A/B=653-796"/>
</dbReference>
<dbReference type="PDB" id="1MM7">
    <property type="method" value="X-ray"/>
    <property type="resolution" value="1.65 A"/>
    <property type="chains" value="A/B/C=413-527, A/B/C=653-796"/>
</dbReference>
<dbReference type="PDB" id="1MQD">
    <property type="method" value="X-ray"/>
    <property type="resolution" value="1.46 A"/>
    <property type="chains" value="A/B/C/D=413-527, A/B/C/D=653-794"/>
</dbReference>
<dbReference type="PDB" id="1MQG">
    <property type="method" value="X-ray"/>
    <property type="resolution" value="2.15 A"/>
    <property type="chains" value="A/B=413-527, A/B=653-796"/>
</dbReference>
<dbReference type="PDB" id="1MQH">
    <property type="method" value="X-ray"/>
    <property type="resolution" value="1.80 A"/>
    <property type="chains" value="A=413-527, A=653-796"/>
</dbReference>
<dbReference type="PDB" id="1MQI">
    <property type="method" value="X-ray"/>
    <property type="resolution" value="1.35 A"/>
    <property type="chains" value="A=413-527, A=653-796"/>
</dbReference>
<dbReference type="PDB" id="1MQJ">
    <property type="method" value="X-ray"/>
    <property type="resolution" value="1.65 A"/>
    <property type="chains" value="A=413-527, A=653-796"/>
</dbReference>
<dbReference type="PDB" id="1MS7">
    <property type="method" value="X-ray"/>
    <property type="resolution" value="1.97 A"/>
    <property type="chains" value="A/B/C=413-527, A/B/C=653-796"/>
</dbReference>
<dbReference type="PDB" id="1MXU">
    <property type="method" value="X-ray"/>
    <property type="resolution" value="1.80 A"/>
    <property type="chains" value="A/B/C=413-527, A/B/C=653-796"/>
</dbReference>
<dbReference type="PDB" id="1MXV">
    <property type="method" value="X-ray"/>
    <property type="resolution" value="1.95 A"/>
    <property type="chains" value="A/B/C=413-527, A/B/C=653-796"/>
</dbReference>
<dbReference type="PDB" id="1MXW">
    <property type="method" value="X-ray"/>
    <property type="resolution" value="1.90 A"/>
    <property type="chains" value="A/B/C=413-527, A/B/C=653-796"/>
</dbReference>
<dbReference type="PDB" id="1MXX">
    <property type="method" value="X-ray"/>
    <property type="resolution" value="2.00 A"/>
    <property type="chains" value="A/B/C=413-527, A/B/C=653-796"/>
</dbReference>
<dbReference type="PDB" id="1MXY">
    <property type="method" value="X-ray"/>
    <property type="resolution" value="1.95 A"/>
    <property type="chains" value="A/B/C=413-527, A/B/C=653-796"/>
</dbReference>
<dbReference type="PDB" id="1MXZ">
    <property type="method" value="X-ray"/>
    <property type="resolution" value="1.90 A"/>
    <property type="chains" value="A/B/C=413-527, A/B/C=653-796"/>
</dbReference>
<dbReference type="PDB" id="1MY0">
    <property type="method" value="X-ray"/>
    <property type="resolution" value="1.90 A"/>
    <property type="chains" value="A/B/C=413-527, A/B/C=653-796"/>
</dbReference>
<dbReference type="PDB" id="1MY1">
    <property type="method" value="X-ray"/>
    <property type="resolution" value="1.90 A"/>
    <property type="chains" value="A/B/C=413-527, A/B/C=653-796"/>
</dbReference>
<dbReference type="PDB" id="1MY2">
    <property type="method" value="X-ray"/>
    <property type="resolution" value="1.80 A"/>
    <property type="chains" value="A/B/C=413-527, A/B/C=653-796"/>
</dbReference>
<dbReference type="PDB" id="1MY3">
    <property type="method" value="X-ray"/>
    <property type="resolution" value="1.75 A"/>
    <property type="chains" value="A/B/C=413-527, A/B/C=653-796"/>
</dbReference>
<dbReference type="PDB" id="1MY4">
    <property type="method" value="X-ray"/>
    <property type="resolution" value="1.90 A"/>
    <property type="chains" value="A/B/C=413-527, A/B/C=653-796"/>
</dbReference>
<dbReference type="PDB" id="1N0T">
    <property type="method" value="X-ray"/>
    <property type="resolution" value="2.10 A"/>
    <property type="chains" value="A/B/C/D=413-527, A/B/C/D=653-796"/>
</dbReference>
<dbReference type="PDB" id="1NNK">
    <property type="method" value="X-ray"/>
    <property type="resolution" value="1.85 A"/>
    <property type="chains" value="A=413-527, A=653-796"/>
</dbReference>
<dbReference type="PDB" id="1NNP">
    <property type="method" value="X-ray"/>
    <property type="resolution" value="1.90 A"/>
    <property type="chains" value="A/B=413-527, A/B=653-796"/>
</dbReference>
<dbReference type="PDB" id="1P1N">
    <property type="method" value="X-ray"/>
    <property type="resolution" value="1.60 A"/>
    <property type="chains" value="A=413-527, A=653-796"/>
</dbReference>
<dbReference type="PDB" id="1P1O">
    <property type="method" value="X-ray"/>
    <property type="resolution" value="1.60 A"/>
    <property type="chains" value="A=413-527, A=653-796"/>
</dbReference>
<dbReference type="PDB" id="1P1Q">
    <property type="method" value="X-ray"/>
    <property type="resolution" value="2.00 A"/>
    <property type="chains" value="A/B/C=413-527, A/B/C=653-796"/>
</dbReference>
<dbReference type="PDB" id="1P1U">
    <property type="method" value="X-ray"/>
    <property type="resolution" value="2.00 A"/>
    <property type="chains" value="A/B=413-527, A/B=653-796"/>
</dbReference>
<dbReference type="PDB" id="1P1W">
    <property type="method" value="X-ray"/>
    <property type="resolution" value="1.80 A"/>
    <property type="chains" value="A/B=413-527, A/B=653-796"/>
</dbReference>
<dbReference type="PDB" id="1SYH">
    <property type="method" value="X-ray"/>
    <property type="resolution" value="1.80 A"/>
    <property type="chains" value="A=413-527, A=653-796"/>
</dbReference>
<dbReference type="PDB" id="1SYI">
    <property type="method" value="X-ray"/>
    <property type="resolution" value="2.10 A"/>
    <property type="chains" value="A/B=413-527, A/B=653-796"/>
</dbReference>
<dbReference type="PDB" id="1WVJ">
    <property type="method" value="X-ray"/>
    <property type="resolution" value="1.75 A"/>
    <property type="chains" value="A=413-527, A=653-796"/>
</dbReference>
<dbReference type="PDB" id="1XHY">
    <property type="method" value="X-ray"/>
    <property type="resolution" value="1.85 A"/>
    <property type="chains" value="A=413-527, A=653-796"/>
</dbReference>
<dbReference type="PDB" id="2AIX">
    <property type="method" value="X-ray"/>
    <property type="resolution" value="2.17 A"/>
    <property type="chains" value="A=413-527, A=653-796"/>
</dbReference>
<dbReference type="PDB" id="2AL4">
    <property type="method" value="X-ray"/>
    <property type="resolution" value="1.70 A"/>
    <property type="chains" value="A/B/C/D/E/F=413-527, A/B/C/D/E/F=653-796"/>
</dbReference>
<dbReference type="PDB" id="2AL5">
    <property type="method" value="X-ray"/>
    <property type="resolution" value="1.65 A"/>
    <property type="chains" value="A/B=413-527, A/B=653-796"/>
</dbReference>
<dbReference type="PDB" id="2ANJ">
    <property type="method" value="X-ray"/>
    <property type="resolution" value="2.10 A"/>
    <property type="chains" value="A=413-527, A=653-796"/>
</dbReference>
<dbReference type="PDB" id="2CMO">
    <property type="method" value="X-ray"/>
    <property type="resolution" value="2.65 A"/>
    <property type="chains" value="A/B=413-527, A/B=653-796"/>
</dbReference>
<dbReference type="PDB" id="2GFE">
    <property type="method" value="X-ray"/>
    <property type="resolution" value="1.54 A"/>
    <property type="chains" value="A/B/C=413-527, A/B/C=653-795"/>
</dbReference>
<dbReference type="PDB" id="2I3V">
    <property type="method" value="X-ray"/>
    <property type="resolution" value="2.40 A"/>
    <property type="chains" value="A/B/C/D=413-527, A/B/C/D=655-794"/>
</dbReference>
<dbReference type="PDB" id="2I3W">
    <property type="method" value="X-ray"/>
    <property type="resolution" value="2.30 A"/>
    <property type="chains" value="A/B=413-527, A/B=653-794"/>
</dbReference>
<dbReference type="PDB" id="2P2A">
    <property type="method" value="X-ray"/>
    <property type="resolution" value="2.26 A"/>
    <property type="chains" value="A/B=413-527, A/B=653-796"/>
</dbReference>
<dbReference type="PDB" id="2UXA">
    <property type="method" value="X-ray"/>
    <property type="resolution" value="2.38 A"/>
    <property type="chains" value="A/B/C=412-795"/>
</dbReference>
<dbReference type="PDB" id="2XX7">
    <property type="method" value="X-ray"/>
    <property type="resolution" value="2.20 A"/>
    <property type="chains" value="A/B/C=413-527, A/B/C=653-795"/>
</dbReference>
<dbReference type="PDB" id="2XX8">
    <property type="method" value="X-ray"/>
    <property type="resolution" value="1.55 A"/>
    <property type="chains" value="A/B/C=413-527, A/B/C=653-796"/>
</dbReference>
<dbReference type="PDB" id="2XX9">
    <property type="method" value="X-ray"/>
    <property type="resolution" value="1.97 A"/>
    <property type="chains" value="A/B/C=413-527, A/B/C=653-796"/>
</dbReference>
<dbReference type="PDB" id="2XXH">
    <property type="method" value="X-ray"/>
    <property type="resolution" value="1.50 A"/>
    <property type="chains" value="A/B/C=413-527, A/B/C=653-796"/>
</dbReference>
<dbReference type="PDB" id="2XXI">
    <property type="method" value="X-ray"/>
    <property type="resolution" value="1.60 A"/>
    <property type="chains" value="A/B/C=413-527, A/B/C=653-796"/>
</dbReference>
<dbReference type="PDB" id="3B6Q">
    <property type="method" value="X-ray"/>
    <property type="resolution" value="2.00 A"/>
    <property type="chains" value="A=413-527, A=653-796"/>
</dbReference>
<dbReference type="PDB" id="3B6T">
    <property type="method" value="X-ray"/>
    <property type="resolution" value="2.10 A"/>
    <property type="chains" value="A=413-527, A=653-796"/>
</dbReference>
<dbReference type="PDB" id="3B6W">
    <property type="method" value="X-ray"/>
    <property type="resolution" value="1.70 A"/>
    <property type="chains" value="A/B/C/D=413-527, A/B/C/D=653-796"/>
</dbReference>
<dbReference type="PDB" id="3B7D">
    <property type="method" value="X-ray"/>
    <property type="resolution" value="2.50 A"/>
    <property type="chains" value="A/B/C/D/E/F/G/H=413-527, A/B/C/D/E/F/G/H=653-794"/>
</dbReference>
<dbReference type="PDB" id="3BBR">
    <property type="method" value="X-ray"/>
    <property type="resolution" value="2.25 A"/>
    <property type="chains" value="A/B=413-527, A/B=653-796"/>
</dbReference>
<dbReference type="PDB" id="3BFT">
    <property type="method" value="X-ray"/>
    <property type="resolution" value="2.27 A"/>
    <property type="chains" value="A/B/C=413-527, A/B/C=653-796"/>
</dbReference>
<dbReference type="PDB" id="3BFU">
    <property type="method" value="X-ray"/>
    <property type="resolution" value="1.95 A"/>
    <property type="chains" value="A/B/C/D=413-527, A/B/C/D=653-796"/>
</dbReference>
<dbReference type="PDB" id="3BKI">
    <property type="method" value="X-ray"/>
    <property type="resolution" value="1.87 A"/>
    <property type="chains" value="B/C/D/P=413-527, B/C/D/P=653-796"/>
</dbReference>
<dbReference type="PDB" id="3DP6">
    <property type="method" value="X-ray"/>
    <property type="resolution" value="1.55 A"/>
    <property type="chains" value="A/B/C=413-527, A/B/C=653-794"/>
</dbReference>
<dbReference type="PDB" id="3H03">
    <property type="method" value="X-ray"/>
    <property type="resolution" value="1.90 A"/>
    <property type="chains" value="A/B/D/G=414-527, A/B/D/G=653-794"/>
</dbReference>
<dbReference type="PDB" id="3H06">
    <property type="method" value="X-ray"/>
    <property type="resolution" value="2.80 A"/>
    <property type="chains" value="B/E/G/H/J/L/N/P=414-527, B/E/G/H/J/L/N/P=653-794"/>
</dbReference>
<dbReference type="PDB" id="3H5V">
    <property type="method" value="X-ray"/>
    <property type="resolution" value="2.33 A"/>
    <property type="chains" value="A/B/C=21-404"/>
</dbReference>
<dbReference type="PDB" id="3H5W">
    <property type="method" value="X-ray"/>
    <property type="resolution" value="2.69 A"/>
    <property type="chains" value="A/B=21-404"/>
</dbReference>
<dbReference type="PDB" id="3H6T">
    <property type="method" value="X-ray"/>
    <property type="resolution" value="2.25 A"/>
    <property type="chains" value="A/B/C=413-527, A/B/C=653-796"/>
</dbReference>
<dbReference type="PDB" id="3H6U">
    <property type="method" value="X-ray"/>
    <property type="resolution" value="1.85 A"/>
    <property type="chains" value="A=413-527, A=653-796"/>
</dbReference>
<dbReference type="PDB" id="3H6V">
    <property type="method" value="X-ray"/>
    <property type="resolution" value="2.10 A"/>
    <property type="chains" value="A/B=413-527, A/B=653-796"/>
</dbReference>
<dbReference type="PDB" id="3H6W">
    <property type="method" value="X-ray"/>
    <property type="resolution" value="1.49 A"/>
    <property type="chains" value="A/B=413-527, A/B=653-796"/>
</dbReference>
<dbReference type="PDB" id="3HSY">
    <property type="method" value="X-ray"/>
    <property type="resolution" value="1.75 A"/>
    <property type="chains" value="A/B=25-400"/>
</dbReference>
<dbReference type="PDB" id="3IJO">
    <property type="method" value="X-ray"/>
    <property type="resolution" value="2.00 A"/>
    <property type="chains" value="B/E/H=414-527, B/E/H=653-794"/>
</dbReference>
<dbReference type="PDB" id="3IJX">
    <property type="method" value="X-ray"/>
    <property type="resolution" value="2.88 A"/>
    <property type="chains" value="B/D/H=414-527, B/D/H=653-794"/>
</dbReference>
<dbReference type="PDB" id="3IK6">
    <property type="method" value="X-ray"/>
    <property type="resolution" value="2.10 A"/>
    <property type="chains" value="B/E/H=414-527, B/E/H=653-794"/>
</dbReference>
<dbReference type="PDB" id="3IL1">
    <property type="method" value="X-ray"/>
    <property type="resolution" value="2.00 A"/>
    <property type="chains" value="B/E/H=414-527, B/E/H=653-794"/>
</dbReference>
<dbReference type="PDB" id="3ILT">
    <property type="method" value="X-ray"/>
    <property type="resolution" value="2.11 A"/>
    <property type="chains" value="B/E/H=414-527, B/E/H=653-794"/>
</dbReference>
<dbReference type="PDB" id="3ILU">
    <property type="method" value="X-ray"/>
    <property type="resolution" value="2.00 A"/>
    <property type="chains" value="B/E/H=414-527, B/E/H=653-794"/>
</dbReference>
<dbReference type="PDB" id="3KG2">
    <property type="method" value="X-ray"/>
    <property type="resolution" value="3.60 A"/>
    <property type="chains" value="A/B/C/D=25-412, A/B/C/D=414-847"/>
</dbReference>
<dbReference type="PDB" id="3KGC">
    <property type="method" value="X-ray"/>
    <property type="resolution" value="1.55 A"/>
    <property type="chains" value="A/B=414-527, A/B=654-795"/>
</dbReference>
<dbReference type="PDB" id="3LSF">
    <property type="method" value="X-ray"/>
    <property type="resolution" value="1.85 A"/>
    <property type="chains" value="B/E/H=414-527, B/E/H=653-794"/>
</dbReference>
<dbReference type="PDB" id="3LSL">
    <property type="method" value="X-ray"/>
    <property type="resolution" value="2.12 A"/>
    <property type="chains" value="A/D/G=414-527, A/D/G=653-794"/>
</dbReference>
<dbReference type="PDB" id="3M3L">
    <property type="method" value="X-ray"/>
    <property type="resolution" value="1.85 A"/>
    <property type="chains" value="A/D/G=414-794"/>
</dbReference>
<dbReference type="PDB" id="3N6V">
    <property type="method" value="X-ray"/>
    <property type="resolution" value="3.20 A"/>
    <property type="chains" value="A/B/C/D/E/F=27-400"/>
</dbReference>
<dbReference type="PDB" id="3O28">
    <property type="method" value="X-ray"/>
    <property type="resolution" value="2.00 A"/>
    <property type="chains" value="A=413-527, A=653-795"/>
</dbReference>
<dbReference type="PDB" id="3O29">
    <property type="method" value="X-ray"/>
    <property type="resolution" value="2.02 A"/>
    <property type="chains" value="A=413-527, A=653-795"/>
</dbReference>
<dbReference type="PDB" id="3O2A">
    <property type="method" value="X-ray"/>
    <property type="resolution" value="1.90 A"/>
    <property type="chains" value="A=413-527, A=653-795"/>
</dbReference>
<dbReference type="PDB" id="3O2J">
    <property type="method" value="X-ray"/>
    <property type="resolution" value="1.95 A"/>
    <property type="chains" value="A/B=22-400"/>
</dbReference>
<dbReference type="PDB" id="3O6G">
    <property type="method" value="X-ray"/>
    <property type="resolution" value="1.80 A"/>
    <property type="chains" value="A=413-527, A=653-795"/>
</dbReference>
<dbReference type="PDB" id="3O6H">
    <property type="method" value="X-ray"/>
    <property type="resolution" value="2.10 A"/>
    <property type="chains" value="A=413-527, A=653-795"/>
</dbReference>
<dbReference type="PDB" id="3O6I">
    <property type="method" value="X-ray"/>
    <property type="resolution" value="1.80 A"/>
    <property type="chains" value="A=413-527, A=653-795"/>
</dbReference>
<dbReference type="PDB" id="3PD8">
    <property type="method" value="X-ray"/>
    <property type="resolution" value="2.48 A"/>
    <property type="chains" value="A/B/C=413-527, A/B/C=653-795"/>
</dbReference>
<dbReference type="PDB" id="3PD9">
    <property type="method" value="X-ray"/>
    <property type="resolution" value="2.10 A"/>
    <property type="chains" value="A/B=413-527, A/B=653-795"/>
</dbReference>
<dbReference type="PDB" id="3PMV">
    <property type="method" value="X-ray"/>
    <property type="resolution" value="1.80 A"/>
    <property type="chains" value="A=413-527, A=653-795"/>
</dbReference>
<dbReference type="PDB" id="3PMW">
    <property type="method" value="X-ray"/>
    <property type="resolution" value="2.20 A"/>
    <property type="chains" value="A=413-527, A=653-795"/>
</dbReference>
<dbReference type="PDB" id="3PMX">
    <property type="method" value="X-ray"/>
    <property type="resolution" value="1.87 A"/>
    <property type="chains" value="A=413-527, A=653-795"/>
</dbReference>
<dbReference type="PDB" id="3RTF">
    <property type="method" value="X-ray"/>
    <property type="resolution" value="1.70 A"/>
    <property type="chains" value="B/D/F=414-527, B/D/F=653-794"/>
</dbReference>
<dbReference type="PDB" id="3RTW">
    <property type="method" value="X-ray"/>
    <property type="resolution" value="2.10 A"/>
    <property type="chains" value="B/D/F=414-527, B/D/F=653-794"/>
</dbReference>
<dbReference type="PDB" id="3T93">
    <property type="method" value="X-ray"/>
    <property type="resolution" value="1.91 A"/>
    <property type="chains" value="B/D/F=414-527, B/D/F=653-794"/>
</dbReference>
<dbReference type="PDB" id="3T96">
    <property type="method" value="X-ray"/>
    <property type="resolution" value="1.87 A"/>
    <property type="chains" value="B/D/F=414-527, B/D/F=653-794"/>
</dbReference>
<dbReference type="PDB" id="3T9H">
    <property type="method" value="X-ray"/>
    <property type="resolution" value="2.02 A"/>
    <property type="chains" value="B/D/F=414-527, B/D/F=653-794"/>
</dbReference>
<dbReference type="PDB" id="3T9U">
    <property type="method" value="X-ray"/>
    <property type="resolution" value="1.97 A"/>
    <property type="chains" value="A/B/C=414-527, A/B/C=653-794"/>
</dbReference>
<dbReference type="PDB" id="3T9V">
    <property type="method" value="X-ray"/>
    <property type="resolution" value="1.98 A"/>
    <property type="chains" value="A/B=414-527, A/B=653-794"/>
</dbReference>
<dbReference type="PDB" id="3T9X">
    <property type="method" value="X-ray"/>
    <property type="resolution" value="1.82 A"/>
    <property type="chains" value="B/D/F=414-527, B/D/F=653-794"/>
</dbReference>
<dbReference type="PDB" id="3TDJ">
    <property type="method" value="X-ray"/>
    <property type="resolution" value="1.95 A"/>
    <property type="chains" value="A/B=413-527, A/B=653-796"/>
</dbReference>
<dbReference type="PDB" id="3TKD">
    <property type="method" value="X-ray"/>
    <property type="resolution" value="1.45 A"/>
    <property type="chains" value="A/B=413-527, A/B=653-795"/>
</dbReference>
<dbReference type="PDB" id="3TZA">
    <property type="method" value="X-ray"/>
    <property type="resolution" value="1.90 A"/>
    <property type="chains" value="A/B=413-527, A/B=653-796"/>
</dbReference>
<dbReference type="PDB" id="4FAT">
    <property type="method" value="X-ray"/>
    <property type="resolution" value="1.40 A"/>
    <property type="chains" value="A=413-527, A=653-796"/>
</dbReference>
<dbReference type="PDB" id="4G8M">
    <property type="method" value="X-ray"/>
    <property type="resolution" value="2.05 A"/>
    <property type="chains" value="A/B=413-527, A/B=653-796"/>
</dbReference>
<dbReference type="PDB" id="4GXS">
    <property type="method" value="X-ray"/>
    <property type="resolution" value="1.96 A"/>
    <property type="chains" value="B/D=414-527, B/D=653-794"/>
</dbReference>
<dbReference type="PDB" id="4H8J">
    <property type="method" value="X-ray"/>
    <property type="resolution" value="1.80 A"/>
    <property type="chains" value="A/B/C/D=413-527, A/B/C/D=653-797"/>
</dbReference>
<dbReference type="PDB" id="4IGT">
    <property type="method" value="X-ray"/>
    <property type="resolution" value="1.24 A"/>
    <property type="chains" value="A=413-527, A=653-796"/>
</dbReference>
<dbReference type="PDB" id="4ISU">
    <property type="method" value="X-ray"/>
    <property type="resolution" value="2.30 A"/>
    <property type="chains" value="A/B/C/D=413-527, A/B/C/D=653-796"/>
</dbReference>
<dbReference type="PDB" id="4IY5">
    <property type="method" value="X-ray"/>
    <property type="resolution" value="2.00 A"/>
    <property type="chains" value="A/B=413-527, A/B=653-796"/>
</dbReference>
<dbReference type="PDB" id="4IY6">
    <property type="method" value="X-ray"/>
    <property type="resolution" value="1.72 A"/>
    <property type="chains" value="A=413-527, A=653-796"/>
</dbReference>
<dbReference type="PDB" id="4L17">
    <property type="method" value="X-ray"/>
    <property type="resolution" value="2.80 A"/>
    <property type="chains" value="A/C/E/G=413-527, A/C/E/G=653-796"/>
</dbReference>
<dbReference type="PDB" id="4LZ5">
    <property type="method" value="X-ray"/>
    <property type="resolution" value="1.50 A"/>
    <property type="chains" value="A/B/C=404-527, A/B/C=653-796"/>
</dbReference>
<dbReference type="PDB" id="4LZ7">
    <property type="method" value="X-ray"/>
    <property type="resolution" value="2.10 A"/>
    <property type="chains" value="A/B/C=404-527, A/B/C=653-796"/>
</dbReference>
<dbReference type="PDB" id="4LZ8">
    <property type="method" value="X-ray"/>
    <property type="resolution" value="1.85 A"/>
    <property type="chains" value="A/B/C=404-527, A/B/C=653-796"/>
</dbReference>
<dbReference type="PDB" id="4N07">
    <property type="method" value="X-ray"/>
    <property type="resolution" value="1.87 A"/>
    <property type="chains" value="A/B/C=413-527, A/B/C=653-796"/>
</dbReference>
<dbReference type="PDB" id="4O3A">
    <property type="method" value="X-ray"/>
    <property type="resolution" value="1.80 A"/>
    <property type="chains" value="A/B/C=413-527, A/B/C=653-796"/>
</dbReference>
<dbReference type="PDB" id="4O3B">
    <property type="method" value="X-ray"/>
    <property type="resolution" value="1.91 A"/>
    <property type="chains" value="A/B=413-527, A/B=653-796"/>
</dbReference>
<dbReference type="PDB" id="4O3C">
    <property type="method" value="X-ray"/>
    <property type="resolution" value="1.50 A"/>
    <property type="chains" value="A=413-527, A=653-796"/>
</dbReference>
<dbReference type="PDB" id="4Q30">
    <property type="method" value="X-ray"/>
    <property type="resolution" value="2.03 A"/>
    <property type="chains" value="B/D/F=414-527, B/D/F=653-794"/>
</dbReference>
<dbReference type="PDB" id="4U1O">
    <property type="method" value="X-ray"/>
    <property type="resolution" value="1.85 A"/>
    <property type="chains" value="A=413-527, A=653-796"/>
</dbReference>
<dbReference type="PDB" id="4U1W">
    <property type="method" value="X-ray"/>
    <property type="resolution" value="3.25 A"/>
    <property type="chains" value="A/B/C/D=25-412, A/B/C/D=414-622, A/B/C/D=624-847"/>
</dbReference>
<dbReference type="PDB" id="4U1X">
    <property type="method" value="X-ray"/>
    <property type="resolution" value="3.30 A"/>
    <property type="chains" value="A/B/C/D=25-412, A/B/C/D=414-555, A/B/C/D=557-602, A/B/C/D=604-622, A/B/C/D=624-847"/>
</dbReference>
<dbReference type="PDB" id="4U1Y">
    <property type="method" value="X-ray"/>
    <property type="resolution" value="3.90 A"/>
    <property type="chains" value="A/B/C/D=25-412, A/B/C/D=414-555, A/B/C/D=557-602, A/B/C/D=604-622, A/B/C/D=624-847"/>
</dbReference>
<dbReference type="PDB" id="4U1Z">
    <property type="method" value="X-ray"/>
    <property type="resolution" value="1.94 A"/>
    <property type="chains" value="A=413-527, A=653-796"/>
</dbReference>
<dbReference type="PDB" id="4U21">
    <property type="method" value="X-ray"/>
    <property type="resolution" value="1.39 A"/>
    <property type="chains" value="A/B=413-527, A/B=654-796"/>
</dbReference>
<dbReference type="PDB" id="4U22">
    <property type="method" value="X-ray"/>
    <property type="resolution" value="1.44 A"/>
    <property type="chains" value="A=413-527, A=653-796"/>
</dbReference>
<dbReference type="PDB" id="4U23">
    <property type="method" value="X-ray"/>
    <property type="resolution" value="1.67 A"/>
    <property type="chains" value="A=413-527, A=653-796"/>
</dbReference>
<dbReference type="PDB" id="4U2P">
    <property type="method" value="X-ray"/>
    <property type="resolution" value="3.24 A"/>
    <property type="chains" value="A/B/C/D=25-412, A/B/C/D=414-622, A/B/C/D=624-847"/>
</dbReference>
<dbReference type="PDB" id="4U2Q">
    <property type="method" value="X-ray"/>
    <property type="resolution" value="3.52 A"/>
    <property type="chains" value="A/B/C/D=25-412, A/B/C/D=414-622, A/B/C/D=624-847"/>
</dbReference>
<dbReference type="PDB" id="4U2R">
    <property type="method" value="X-ray"/>
    <property type="resolution" value="1.41 A"/>
    <property type="chains" value="A/B/C/D=413-527, A/B/C/D=653-796"/>
</dbReference>
<dbReference type="PDB" id="4U4F">
    <property type="method" value="X-ray"/>
    <property type="resolution" value="4.79 A"/>
    <property type="chains" value="A/B/C/D=25-412, A/B/C/D=414-847"/>
</dbReference>
<dbReference type="PDB" id="4U4G">
    <property type="method" value="X-ray"/>
    <property type="resolution" value="4.49 A"/>
    <property type="chains" value="A/B/C/D=25-412, A/B/C/D=414-847"/>
</dbReference>
<dbReference type="PDB" id="4U4S">
    <property type="method" value="X-ray"/>
    <property type="resolution" value="1.90 A"/>
    <property type="chains" value="A/B=413-527, A/B=653-796"/>
</dbReference>
<dbReference type="PDB" id="4U4X">
    <property type="method" value="X-ray"/>
    <property type="resolution" value="1.56 A"/>
    <property type="chains" value="A/B=413-527, A/B=653-796"/>
</dbReference>
<dbReference type="PDB" id="4U5B">
    <property type="method" value="X-ray"/>
    <property type="resolution" value="3.50 A"/>
    <property type="chains" value="A/B/C/D=25-412, A/B/C/D=414-555, A/B/C/D=557-602, A/B/C/D=604-622, A/B/C/D=624-850"/>
</dbReference>
<dbReference type="PDB" id="4U5C">
    <property type="method" value="X-ray"/>
    <property type="resolution" value="3.69 A"/>
    <property type="chains" value="A/B/C/D=25-412, A/B/C/D=414-555, A/B/C/D=557-602, A/B/C/D=604-622, A/B/C/D=624-850"/>
</dbReference>
<dbReference type="PDB" id="4U5D">
    <property type="method" value="X-ray"/>
    <property type="resolution" value="3.58 A"/>
    <property type="chains" value="A/B/C/D=25-412, A/B/C/D=414-555, A/B/C/D=557-602, A/B/C/D=604-622, A/B/C/D=624-850"/>
</dbReference>
<dbReference type="PDB" id="4U5E">
    <property type="method" value="X-ray"/>
    <property type="resolution" value="3.51 A"/>
    <property type="chains" value="A/B/C/D=25-412, A/B/C/D=414-555, A/B/C/D=557-602, A/B/C/D=604-622, A/B/C/D=624-850"/>
</dbReference>
<dbReference type="PDB" id="4U5F">
    <property type="method" value="X-ray"/>
    <property type="resolution" value="3.70 A"/>
    <property type="chains" value="A/B/C/D=25-412, A/B/C/D=414-850"/>
</dbReference>
<dbReference type="PDB" id="4UQ6">
    <property type="method" value="EM"/>
    <property type="resolution" value="12.80 A"/>
    <property type="chains" value="A/B/C/D=22-847"/>
</dbReference>
<dbReference type="PDB" id="4UQJ">
    <property type="method" value="EM"/>
    <property type="resolution" value="10.40 A"/>
    <property type="chains" value="A/B/C/D=22-847"/>
</dbReference>
<dbReference type="PDB" id="4UQK">
    <property type="method" value="EM"/>
    <property type="resolution" value="16.40 A"/>
    <property type="chains" value="A/B/C/D=22-847"/>
</dbReference>
<dbReference type="PDB" id="4X48">
    <property type="method" value="X-ray"/>
    <property type="resolution" value="1.89 A"/>
    <property type="chains" value="A/B/C=413-527, A/B/C=653-796"/>
</dbReference>
<dbReference type="PDB" id="4YMA">
    <property type="method" value="X-ray"/>
    <property type="resolution" value="1.90 A"/>
    <property type="chains" value="A/B=413-527, A/B=653-797"/>
</dbReference>
<dbReference type="PDB" id="4YU0">
    <property type="method" value="X-ray"/>
    <property type="resolution" value="1.26 A"/>
    <property type="chains" value="A/B=413-527, A/B=653-796"/>
</dbReference>
<dbReference type="PDB" id="4Z0I">
    <property type="method" value="X-ray"/>
    <property type="resolution" value="1.45 A"/>
    <property type="chains" value="A/B=413-527, A/B=653-796"/>
</dbReference>
<dbReference type="PDB" id="5BUU">
    <property type="method" value="X-ray"/>
    <property type="resolution" value="2.07 A"/>
    <property type="chains" value="A/B=413-527, A/B=653-796"/>
</dbReference>
<dbReference type="PDB" id="5CBR">
    <property type="method" value="X-ray"/>
    <property type="resolution" value="2.00 A"/>
    <property type="chains" value="A=413-527, A=653-797"/>
</dbReference>
<dbReference type="PDB" id="5CBS">
    <property type="method" value="X-ray"/>
    <property type="resolution" value="1.80 A"/>
    <property type="chains" value="A/B/C/D=413-527, A/B/C/D=653-797"/>
</dbReference>
<dbReference type="PDB" id="5ELV">
    <property type="method" value="X-ray"/>
    <property type="resolution" value="1.92 A"/>
    <property type="chains" value="A/B=413-527, A/B=653-797"/>
</dbReference>
<dbReference type="PDB" id="5FHM">
    <property type="method" value="X-ray"/>
    <property type="resolution" value="1.55 A"/>
    <property type="chains" value="A/B=413-527, A/B=653-797"/>
</dbReference>
<dbReference type="PDB" id="5FHN">
    <property type="method" value="X-ray"/>
    <property type="resolution" value="1.60 A"/>
    <property type="chains" value="A=413-527, A=653-797"/>
</dbReference>
<dbReference type="PDB" id="5FHO">
    <property type="method" value="X-ray"/>
    <property type="resolution" value="2.30 A"/>
    <property type="chains" value="A/B/C/D=413-527, A/B/C/D=653-797"/>
</dbReference>
<dbReference type="PDB" id="5FTH">
    <property type="method" value="X-ray"/>
    <property type="resolution" value="2.90 A"/>
    <property type="chains" value="A/B/C=404-527, A/B/C=653-795"/>
</dbReference>
<dbReference type="PDB" id="5FTI">
    <property type="method" value="X-ray"/>
    <property type="resolution" value="1.35 A"/>
    <property type="chains" value="A/B=404-527, A/B=653-795"/>
</dbReference>
<dbReference type="PDB" id="5FWX">
    <property type="method" value="X-ray"/>
    <property type="resolution" value="2.50 A"/>
    <property type="chains" value="A/C=25-400"/>
</dbReference>
<dbReference type="PDB" id="5FWY">
    <property type="method" value="X-ray"/>
    <property type="resolution" value="2.12 A"/>
    <property type="chains" value="A/C=25-400"/>
</dbReference>
<dbReference type="PDB" id="5IDE">
    <property type="method" value="EM"/>
    <property type="resolution" value="8.25 A"/>
    <property type="chains" value="A/C=23-883"/>
</dbReference>
<dbReference type="PDB" id="5IDF">
    <property type="method" value="EM"/>
    <property type="resolution" value="10.31 A"/>
    <property type="chains" value="A/C=23-883"/>
</dbReference>
<dbReference type="PDB" id="5JEI">
    <property type="method" value="X-ray"/>
    <property type="resolution" value="1.23 A"/>
    <property type="chains" value="A=413-527, A=653-797"/>
</dbReference>
<dbReference type="PDB" id="5KBS">
    <property type="method" value="EM"/>
    <property type="resolution" value="8.70 A"/>
    <property type="chains" value="A/B/C/D=25-847"/>
</dbReference>
<dbReference type="PDB" id="5KBT">
    <property type="method" value="EM"/>
    <property type="resolution" value="6.40 A"/>
    <property type="chains" value="A/B/C/D=25-847"/>
</dbReference>
<dbReference type="PDB" id="5KBU">
    <property type="method" value="EM"/>
    <property type="resolution" value="7.80 A"/>
    <property type="chains" value="A/B/C/D=25-847"/>
</dbReference>
<dbReference type="PDB" id="5KBV">
    <property type="method" value="EM"/>
    <property type="resolution" value="6.80 A"/>
    <property type="chains" value="A/B/C/D=25-412, A/B/C/D=414-847"/>
</dbReference>
<dbReference type="PDB" id="5KK2">
    <property type="method" value="EM"/>
    <property type="resolution" value="7.30 A"/>
    <property type="chains" value="A/B/C/D=1-883"/>
</dbReference>
<dbReference type="PDB" id="5L1B">
    <property type="method" value="X-ray"/>
    <property type="resolution" value="4.00 A"/>
    <property type="chains" value="A/B/C/D=25-412, A/B/C/D=414-565, A/B/C/D=588-847"/>
</dbReference>
<dbReference type="PDB" id="5L1E">
    <property type="method" value="X-ray"/>
    <property type="resolution" value="4.37 A"/>
    <property type="chains" value="A/B/C/D=25-412, A/B/C/D=414-565, A/B/C/D=588-847"/>
</dbReference>
<dbReference type="PDB" id="5L1F">
    <property type="method" value="X-ray"/>
    <property type="resolution" value="4.00 A"/>
    <property type="chains" value="A/B/C/D=25-412, A/B/C/D=414-565, A/B/C/D=588-847"/>
</dbReference>
<dbReference type="PDB" id="5L1G">
    <property type="method" value="X-ray"/>
    <property type="resolution" value="4.51 A"/>
    <property type="chains" value="A/B/C/D=25-412, A/B/C/D=414-565, A/B/C/D=588-847"/>
</dbReference>
<dbReference type="PDB" id="5L1H">
    <property type="method" value="X-ray"/>
    <property type="resolution" value="3.80 A"/>
    <property type="chains" value="A/B/C/D=25-412, A/B/C/D=414-565, A/B/C/D=588-847"/>
</dbReference>
<dbReference type="PDB" id="5N6P">
    <property type="method" value="X-ray"/>
    <property type="resolution" value="2.80 A"/>
    <property type="chains" value="A=25-400"/>
</dbReference>
<dbReference type="PDB" id="5NG9">
    <property type="method" value="X-ray"/>
    <property type="resolution" value="1.15 A"/>
    <property type="chains" value="A=413-527, A=653-797"/>
</dbReference>
<dbReference type="PDB" id="5NIH">
    <property type="method" value="X-ray"/>
    <property type="resolution" value="1.30 A"/>
    <property type="chains" value="A/B=413-527, A/B=653-797"/>
</dbReference>
<dbReference type="PDB" id="5NS9">
    <property type="method" value="X-ray"/>
    <property type="resolution" value="1.44 A"/>
    <property type="chains" value="A/B=413-527, A/B=653-797"/>
</dbReference>
<dbReference type="PDB" id="5O9A">
    <property type="method" value="X-ray"/>
    <property type="resolution" value="1.78 A"/>
    <property type="chains" value="A/B/C/D=413-527, A/B/C/D=653-797"/>
</dbReference>
<dbReference type="PDB" id="5OEW">
    <property type="method" value="X-ray"/>
    <property type="resolution" value="2.00 A"/>
    <property type="chains" value="A/B/C=413-527, A/B/C=653-797"/>
</dbReference>
<dbReference type="PDB" id="5VHW">
    <property type="method" value="EM"/>
    <property type="resolution" value="7.80 A"/>
    <property type="chains" value="A/B/C/D=25-847"/>
</dbReference>
<dbReference type="PDB" id="5VHX">
    <property type="method" value="EM"/>
    <property type="resolution" value="8.30 A"/>
    <property type="chains" value="A/B/C/D/E=25-847"/>
</dbReference>
<dbReference type="PDB" id="5VHY">
    <property type="method" value="EM"/>
    <property type="resolution" value="4.60 A"/>
    <property type="chains" value="A/B/C/D/E/F=25-847"/>
</dbReference>
<dbReference type="PDB" id="5VHZ">
    <property type="method" value="EM"/>
    <property type="resolution" value="8.40 A"/>
    <property type="chains" value="A/B/C/D/E/F=25-847"/>
</dbReference>
<dbReference type="PDB" id="5VOT">
    <property type="method" value="EM"/>
    <property type="resolution" value="4.90 A"/>
    <property type="chains" value="A/B/C/D=1-883"/>
</dbReference>
<dbReference type="PDB" id="5VOU">
    <property type="method" value="EM"/>
    <property type="resolution" value="6.40 A"/>
    <property type="chains" value="A/B/C/D=1-883"/>
</dbReference>
<dbReference type="PDB" id="5VOV">
    <property type="method" value="EM"/>
    <property type="resolution" value="7.70 A"/>
    <property type="chains" value="A/B/C/D=1-883"/>
</dbReference>
<dbReference type="PDB" id="5WEK">
    <property type="method" value="EM"/>
    <property type="resolution" value="4.60 A"/>
    <property type="chains" value="A/B/C/D=25-847"/>
</dbReference>
<dbReference type="PDB" id="5WEL">
    <property type="method" value="EM"/>
    <property type="resolution" value="4.40 A"/>
    <property type="chains" value="A/B/C/D=25-847"/>
</dbReference>
<dbReference type="PDB" id="5WEM">
    <property type="method" value="EM"/>
    <property type="resolution" value="6.10 A"/>
    <property type="chains" value="A/B/C/D=25-847"/>
</dbReference>
<dbReference type="PDB" id="5WEN">
    <property type="method" value="EM"/>
    <property type="resolution" value="6.80 A"/>
    <property type="chains" value="A/B/C/D=25-847"/>
</dbReference>
<dbReference type="PDB" id="5WEO">
    <property type="method" value="EM"/>
    <property type="resolution" value="4.20 A"/>
    <property type="chains" value="A/B/C/D=25-847"/>
</dbReference>
<dbReference type="PDB" id="6DLZ">
    <property type="method" value="EM"/>
    <property type="resolution" value="3.90 A"/>
    <property type="chains" value="A/B/C/D=25-847"/>
</dbReference>
<dbReference type="PDB" id="6DM0">
    <property type="method" value="EM"/>
    <property type="resolution" value="4.40 A"/>
    <property type="chains" value="A/B/C/D=25-847"/>
</dbReference>
<dbReference type="PDB" id="6DM1">
    <property type="method" value="EM"/>
    <property type="resolution" value="4.20 A"/>
    <property type="chains" value="A/B/C/D=25-847"/>
</dbReference>
<dbReference type="PDB" id="6FAZ">
    <property type="method" value="X-ray"/>
    <property type="resolution" value="1.40 A"/>
    <property type="chains" value="A/B=413-527, A/B=653-797"/>
</dbReference>
<dbReference type="PDB" id="6FQG">
    <property type="method" value="X-ray"/>
    <property type="resolution" value="2.34 A"/>
    <property type="chains" value="A/B=413-527, A/B=653-797"/>
</dbReference>
<dbReference type="PDB" id="6FQH">
    <property type="method" value="X-ray"/>
    <property type="resolution" value="1.76 A"/>
    <property type="chains" value="A/B=400-527, A/B=653-797"/>
</dbReference>
<dbReference type="PDB" id="6FQI">
    <property type="method" value="X-ray"/>
    <property type="resolution" value="2.91 A"/>
    <property type="chains" value="A/B=413-527, A/B=653-797"/>
</dbReference>
<dbReference type="PDB" id="6FQJ">
    <property type="method" value="X-ray"/>
    <property type="resolution" value="2.50 A"/>
    <property type="chains" value="A/B/C/D/E/F/G/H=413-527, A/B/C/D/E/F/G/H=653-797"/>
</dbReference>
<dbReference type="PDB" id="6FQK">
    <property type="method" value="X-ray"/>
    <property type="resolution" value="1.98 A"/>
    <property type="chains" value="A/B=400-527, A/B=653-797"/>
</dbReference>
<dbReference type="PDB" id="6GIV">
    <property type="method" value="X-ray"/>
    <property type="resolution" value="1.75 A"/>
    <property type="chains" value="A=413-527, A=653-797"/>
</dbReference>
<dbReference type="PDB" id="6GL4">
    <property type="method" value="X-ray"/>
    <property type="resolution" value="1.95 A"/>
    <property type="chains" value="A/B=413-527, A/B=653-797"/>
</dbReference>
<dbReference type="PDB" id="6HC9">
    <property type="method" value="X-ray"/>
    <property type="resolution" value="2.40 A"/>
    <property type="chains" value="A/B=413-527, A/B=653-797"/>
</dbReference>
<dbReference type="PDB" id="6HCA">
    <property type="method" value="X-ray"/>
    <property type="resolution" value="1.88 A"/>
    <property type="chains" value="A/B=413-527, A/B=653-797"/>
</dbReference>
<dbReference type="PDB" id="6HCB">
    <property type="method" value="X-ray"/>
    <property type="resolution" value="1.90 A"/>
    <property type="chains" value="A/B=413-527, A/B=653-797"/>
</dbReference>
<dbReference type="PDB" id="6HCC">
    <property type="method" value="X-ray"/>
    <property type="resolution" value="1.62 A"/>
    <property type="chains" value="A/B=413-527, A/B=653-797"/>
</dbReference>
<dbReference type="PDB" id="6HCH">
    <property type="method" value="X-ray"/>
    <property type="resolution" value="1.60 A"/>
    <property type="chains" value="A/B/C=413-527, A/B/C=653-797"/>
</dbReference>
<dbReference type="PDB" id="6NJL">
    <property type="method" value="EM"/>
    <property type="resolution" value="6.70 A"/>
    <property type="chains" value="B/D=1-883"/>
</dbReference>
<dbReference type="PDB" id="6NJM">
    <property type="method" value="EM"/>
    <property type="resolution" value="6.50 A"/>
    <property type="chains" value="B/D=1-883"/>
</dbReference>
<dbReference type="PDB" id="6NJN">
    <property type="method" value="EM"/>
    <property type="resolution" value="6.50 A"/>
    <property type="chains" value="B/D=1-883"/>
</dbReference>
<dbReference type="PDB" id="6O9G">
    <property type="method" value="EM"/>
    <property type="resolution" value="4.80 A"/>
    <property type="chains" value="A/B/C/D=25-847"/>
</dbReference>
<dbReference type="PDB" id="6PEQ">
    <property type="method" value="EM"/>
    <property type="resolution" value="2.97 A"/>
    <property type="chains" value="A/B/C/D=1-868"/>
</dbReference>
<dbReference type="PDB" id="6Q54">
    <property type="method" value="X-ray"/>
    <property type="resolution" value="1.40 A"/>
    <property type="chains" value="A/B=413-527, A/B=653-797"/>
</dbReference>
<dbReference type="PDB" id="6Q60">
    <property type="method" value="X-ray"/>
    <property type="resolution" value="1.55 A"/>
    <property type="chains" value="A/B=413-527, A/B=653-797"/>
</dbReference>
<dbReference type="PDB" id="6QKC">
    <property type="method" value="EM"/>
    <property type="resolution" value="4.10 A"/>
    <property type="chains" value="B/D=1-860"/>
</dbReference>
<dbReference type="PDB" id="6QKZ">
    <property type="method" value="EM"/>
    <property type="resolution" value="6.30 A"/>
    <property type="chains" value="B/D=22-860"/>
</dbReference>
<dbReference type="PDB" id="6RUQ">
    <property type="method" value="X-ray"/>
    <property type="resolution" value="4.65 A"/>
    <property type="chains" value="A/B/C/D=25-847"/>
</dbReference>
<dbReference type="PDB" id="6U5S">
    <property type="method" value="EM"/>
    <property type="resolution" value="3.07 A"/>
    <property type="chains" value="A/B/C/D=1-868"/>
</dbReference>
<dbReference type="PDB" id="6U6I">
    <property type="method" value="EM"/>
    <property type="resolution" value="3.12 A"/>
    <property type="chains" value="A/B/C/D=1-868"/>
</dbReference>
<dbReference type="PDB" id="6UCB">
    <property type="method" value="EM"/>
    <property type="resolution" value="3.28 A"/>
    <property type="chains" value="A/B/C/D=1-868"/>
</dbReference>
<dbReference type="PDB" id="6UD4">
    <property type="method" value="EM"/>
    <property type="resolution" value="3.30 A"/>
    <property type="chains" value="A/B/C/D=1-868"/>
</dbReference>
<dbReference type="PDB" id="6UD8">
    <property type="method" value="EM"/>
    <property type="resolution" value="3.20 A"/>
    <property type="chains" value="A/B/C/D=1-868"/>
</dbReference>
<dbReference type="PDB" id="6XSR">
    <property type="method" value="X-ray"/>
    <property type="resolution" value="4.25 A"/>
    <property type="chains" value="A/B/C/D=25-838"/>
</dbReference>
<dbReference type="PDB" id="6YK2">
    <property type="method" value="X-ray"/>
    <property type="resolution" value="1.61 A"/>
    <property type="chains" value="A=413-527, A=653-797"/>
</dbReference>
<dbReference type="PDB" id="6YK3">
    <property type="method" value="X-ray"/>
    <property type="resolution" value="1.20 A"/>
    <property type="chains" value="A=413-527, A=653-797"/>
</dbReference>
<dbReference type="PDB" id="6YK4">
    <property type="method" value="X-ray"/>
    <property type="resolution" value="1.00 A"/>
    <property type="chains" value="A=413-527, A=653-797"/>
</dbReference>
<dbReference type="PDB" id="6YK5">
    <property type="method" value="X-ray"/>
    <property type="resolution" value="1.15 A"/>
    <property type="chains" value="A=413-527, A=653-797"/>
</dbReference>
<dbReference type="PDB" id="6YK6">
    <property type="method" value="X-ray"/>
    <property type="resolution" value="1.47 A"/>
    <property type="chains" value="A=413-527, A=653-797"/>
</dbReference>
<dbReference type="PDB" id="6ZYU">
    <property type="method" value="X-ray"/>
    <property type="resolution" value="1.90 A"/>
    <property type="chains" value="A/B/C=413-527, A/B/C=653-797"/>
</dbReference>
<dbReference type="PDB" id="7OCA">
    <property type="method" value="EM"/>
    <property type="resolution" value="3.40 A"/>
    <property type="chains" value="B/D=1-860"/>
</dbReference>
<dbReference type="PDB" id="7OCC">
    <property type="method" value="EM"/>
    <property type="resolution" value="3.40 A"/>
    <property type="chains" value="B/D=1-860"/>
</dbReference>
<dbReference type="PDB" id="7OCD">
    <property type="method" value="EM"/>
    <property type="resolution" value="3.50 A"/>
    <property type="chains" value="B/D=1-860"/>
</dbReference>
<dbReference type="PDB" id="7OCE">
    <property type="method" value="EM"/>
    <property type="resolution" value="3.10 A"/>
    <property type="chains" value="B/D=1-860"/>
</dbReference>
<dbReference type="PDB" id="7OCF">
    <property type="method" value="EM"/>
    <property type="resolution" value="3.60 A"/>
    <property type="chains" value="B/D=1-860"/>
</dbReference>
<dbReference type="PDB" id="7QHB">
    <property type="method" value="EM"/>
    <property type="resolution" value="3.50 A"/>
    <property type="chains" value="B/D=1-860"/>
</dbReference>
<dbReference type="PDB" id="7QHH">
    <property type="method" value="EM"/>
    <property type="resolution" value="3.60 A"/>
    <property type="chains" value="B/D=1-860"/>
</dbReference>
<dbReference type="PDB" id="7RYY">
    <property type="method" value="EM"/>
    <property type="resolution" value="4.40 A"/>
    <property type="chains" value="A/B/C/D=25-847"/>
</dbReference>
<dbReference type="PDB" id="7RYZ">
    <property type="method" value="EM"/>
    <property type="resolution" value="4.15 A"/>
    <property type="chains" value="A/B/C/D=25-847"/>
</dbReference>
<dbReference type="PDB" id="7RZ4">
    <property type="method" value="EM"/>
    <property type="resolution" value="3.60 A"/>
    <property type="chains" value="A/B/C/D=25-847"/>
</dbReference>
<dbReference type="PDB" id="7RZ5">
    <property type="method" value="EM"/>
    <property type="resolution" value="3.30 A"/>
    <property type="chains" value="A/B/C/D=25-847"/>
</dbReference>
<dbReference type="PDB" id="7RZ6">
    <property type="method" value="EM"/>
    <property type="resolution" value="4.40 A"/>
    <property type="chains" value="A/B/C/D=25-847"/>
</dbReference>
<dbReference type="PDB" id="7RZ7">
    <property type="method" value="EM"/>
    <property type="resolution" value="4.20 A"/>
    <property type="chains" value="A/B/C/D=25-847"/>
</dbReference>
<dbReference type="PDB" id="7RZ8">
    <property type="method" value="EM"/>
    <property type="resolution" value="4.10 A"/>
    <property type="chains" value="A/B/C/D=25-847"/>
</dbReference>
<dbReference type="PDB" id="7RZ9">
    <property type="method" value="EM"/>
    <property type="resolution" value="4.15 A"/>
    <property type="chains" value="A/B/C/D=25-847"/>
</dbReference>
<dbReference type="PDB" id="7RZA">
    <property type="method" value="EM"/>
    <property type="resolution" value="4.26 A"/>
    <property type="chains" value="A/B/C/D=25-847"/>
</dbReference>
<dbReference type="PDB" id="7TNJ">
    <property type="method" value="EM"/>
    <property type="resolution" value="4.02 A"/>
    <property type="chains" value="A/B/C/D=25-847"/>
</dbReference>
<dbReference type="PDB" id="7TNK">
    <property type="method" value="EM"/>
    <property type="resolution" value="4.50 A"/>
    <property type="chains" value="A/B/C/D=25-847"/>
</dbReference>
<dbReference type="PDB" id="7TNL">
    <property type="method" value="EM"/>
    <property type="resolution" value="3.59 A"/>
    <property type="chains" value="A/B/C/D=25-847"/>
</dbReference>
<dbReference type="PDB" id="7TNM">
    <property type="method" value="EM"/>
    <property type="resolution" value="4.74 A"/>
    <property type="chains" value="A/B/C/D=25-847"/>
</dbReference>
<dbReference type="PDB" id="7TNN">
    <property type="method" value="EM"/>
    <property type="resolution" value="3.91 A"/>
    <property type="chains" value="A/B/C/D=25-847"/>
</dbReference>
<dbReference type="PDB" id="7TNO">
    <property type="method" value="EM"/>
    <property type="resolution" value="4.02 A"/>
    <property type="chains" value="A/B/C/D=25-847"/>
</dbReference>
<dbReference type="PDB" id="7TNP">
    <property type="method" value="EM"/>
    <property type="resolution" value="3.96 A"/>
    <property type="chains" value="A/B/C/D=25-847"/>
</dbReference>
<dbReference type="PDB" id="8AYL">
    <property type="method" value="EM"/>
    <property type="resolution" value="3.20 A"/>
    <property type="chains" value="B/D=1-860"/>
</dbReference>
<dbReference type="PDB" id="8AYM">
    <property type="method" value="EM"/>
    <property type="resolution" value="3.30 A"/>
    <property type="chains" value="B/D=1-860"/>
</dbReference>
<dbReference type="PDB" id="8AYN">
    <property type="method" value="EM"/>
    <property type="resolution" value="2.80 A"/>
    <property type="chains" value="B/D=1-860"/>
</dbReference>
<dbReference type="PDB" id="8AYO">
    <property type="method" value="EM"/>
    <property type="resolution" value="3.30 A"/>
    <property type="chains" value="B/D=1-860"/>
</dbReference>
<dbReference type="PDB" id="8C1R">
    <property type="method" value="EM"/>
    <property type="resolution" value="3.20 A"/>
    <property type="chains" value="A/B/C/D=1-883"/>
</dbReference>
<dbReference type="PDB" id="8C1S">
    <property type="method" value="EM"/>
    <property type="resolution" value="3.00 A"/>
    <property type="chains" value="A/B/C/D=1-883"/>
</dbReference>
<dbReference type="PDB" id="8FP4">
    <property type="method" value="EM"/>
    <property type="resolution" value="2.40 A"/>
    <property type="chains" value="A/B/C/D=1-883"/>
</dbReference>
<dbReference type="PDB" id="8FP9">
    <property type="method" value="EM"/>
    <property type="resolution" value="2.44 A"/>
    <property type="chains" value="A/B/C/D=1-883"/>
</dbReference>
<dbReference type="PDB" id="8FPC">
    <property type="method" value="EM"/>
    <property type="resolution" value="2.78 A"/>
    <property type="chains" value="A/B/C/D=1-883"/>
</dbReference>
<dbReference type="PDB" id="8FPG">
    <property type="method" value="EM"/>
    <property type="resolution" value="2.32 A"/>
    <property type="chains" value="A/B/C/D=1-883"/>
</dbReference>
<dbReference type="PDB" id="8FPH">
    <property type="method" value="EM"/>
    <property type="resolution" value="3.14 A"/>
    <property type="chains" value="A/B/C/D=1-883"/>
</dbReference>
<dbReference type="PDB" id="8FPK">
    <property type="method" value="EM"/>
    <property type="resolution" value="2.76 A"/>
    <property type="chains" value="A/B/C/D=1-883"/>
</dbReference>
<dbReference type="PDB" id="8FPL">
    <property type="method" value="EM"/>
    <property type="resolution" value="2.81 A"/>
    <property type="chains" value="A/B/C/D=1-883"/>
</dbReference>
<dbReference type="PDB" id="8FPS">
    <property type="method" value="EM"/>
    <property type="resolution" value="2.38 A"/>
    <property type="chains" value="A/B/C/D=1-883"/>
</dbReference>
<dbReference type="PDB" id="8FPV">
    <property type="method" value="EM"/>
    <property type="resolution" value="3.08 A"/>
    <property type="chains" value="A/B/C/D=1-883"/>
</dbReference>
<dbReference type="PDB" id="8FPY">
    <property type="method" value="EM"/>
    <property type="resolution" value="2.98 A"/>
    <property type="chains" value="A/B/C/D=1-883"/>
</dbReference>
<dbReference type="PDB" id="8FPZ">
    <property type="method" value="EM"/>
    <property type="resolution" value="3.01 A"/>
    <property type="chains" value="A/B/C/D=1-883"/>
</dbReference>
<dbReference type="PDB" id="8FQ1">
    <property type="method" value="EM"/>
    <property type="resolution" value="5.59 A"/>
    <property type="chains" value="A/B/C/D=1-883"/>
</dbReference>
<dbReference type="PDB" id="8FQ2">
    <property type="method" value="EM"/>
    <property type="resolution" value="3.14 A"/>
    <property type="chains" value="A/B/C/D=1-883"/>
</dbReference>
<dbReference type="PDB" id="8FQ3">
    <property type="method" value="EM"/>
    <property type="resolution" value="3.17 A"/>
    <property type="chains" value="A/B/C/D=1-883"/>
</dbReference>
<dbReference type="PDB" id="8FQ5">
    <property type="method" value="EM"/>
    <property type="resolution" value="2.34 A"/>
    <property type="chains" value="A/B/C/D=1-883"/>
</dbReference>
<dbReference type="PDB" id="8FQ6">
    <property type="method" value="EM"/>
    <property type="resolution" value="3.14 A"/>
    <property type="chains" value="A/B/C/D=1-883"/>
</dbReference>
<dbReference type="PDB" id="8FQ8">
    <property type="method" value="EM"/>
    <property type="resolution" value="3.11 A"/>
    <property type="chains" value="A/B/C/D=1-883"/>
</dbReference>
<dbReference type="PDB" id="8FQA">
    <property type="method" value="EM"/>
    <property type="resolution" value="3.35 A"/>
    <property type="chains" value="A/B/C/D=1-883"/>
</dbReference>
<dbReference type="PDB" id="8FQB">
    <property type="method" value="EM"/>
    <property type="resolution" value="2.36 A"/>
    <property type="chains" value="A/B/C/D=1-883"/>
</dbReference>
<dbReference type="PDB" id="8FQD">
    <property type="method" value="EM"/>
    <property type="resolution" value="3.01 A"/>
    <property type="chains" value="A/B/C/D=1-883"/>
</dbReference>
<dbReference type="PDB" id="8FQE">
    <property type="method" value="EM"/>
    <property type="resolution" value="3.14 A"/>
    <property type="chains" value="A/B/C/D=1-883"/>
</dbReference>
<dbReference type="PDB" id="8FQF">
    <property type="method" value="EM"/>
    <property type="resolution" value="2.29 A"/>
    <property type="chains" value="A/B/C/D=1-883"/>
</dbReference>
<dbReference type="PDB" id="8FQG">
    <property type="method" value="EM"/>
    <property type="resolution" value="3.01 A"/>
    <property type="chains" value="A/B/C/D=1-883"/>
</dbReference>
<dbReference type="PDB" id="8FQH">
    <property type="method" value="EM"/>
    <property type="resolution" value="3.43 A"/>
    <property type="chains" value="A/B/C/D=1-883"/>
</dbReference>
<dbReference type="PDB" id="8FR0">
    <property type="method" value="EM"/>
    <property type="resolution" value="3.04 A"/>
    <property type="chains" value="A/B/C/D=1-883"/>
</dbReference>
<dbReference type="PDB" id="8P3Q">
    <property type="method" value="EM"/>
    <property type="resolution" value="2.95 A"/>
    <property type="chains" value="A/B/C/D=1-883"/>
</dbReference>
<dbReference type="PDB" id="8P3S">
    <property type="method" value="EM"/>
    <property type="resolution" value="2.95 A"/>
    <property type="chains" value="A/B/C/D=1-883"/>
</dbReference>
<dbReference type="PDB" id="8P3X">
    <property type="method" value="EM"/>
    <property type="resolution" value="3.36 A"/>
    <property type="chains" value="A/B/C/D=1-883"/>
</dbReference>
<dbReference type="PDB" id="8P3Y">
    <property type="method" value="EM"/>
    <property type="resolution" value="3.55 A"/>
    <property type="chains" value="A/B/C/D=1-883"/>
</dbReference>
<dbReference type="PDB" id="8P3Z">
    <property type="method" value="EM"/>
    <property type="resolution" value="3.46 A"/>
    <property type="chains" value="A/B/C/D=1-883"/>
</dbReference>
<dbReference type="PDB" id="8QEZ">
    <property type="method" value="X-ray"/>
    <property type="resolution" value="1.55 A"/>
    <property type="chains" value="A/B/C=413-527, A/B/C=653-797"/>
</dbReference>
<dbReference type="PDB" id="8SS2">
    <property type="method" value="EM"/>
    <property type="resolution" value="3.58 A"/>
    <property type="chains" value="A/B/C/D=25-847"/>
</dbReference>
<dbReference type="PDB" id="8SS3">
    <property type="method" value="EM"/>
    <property type="resolution" value="3.21 A"/>
    <property type="chains" value="A/B/C/D=25-847"/>
</dbReference>
<dbReference type="PDB" id="8SS4">
    <property type="method" value="EM"/>
    <property type="resolution" value="3.30 A"/>
    <property type="chains" value="A/B/C/D=25-847"/>
</dbReference>
<dbReference type="PDB" id="8SS5">
    <property type="method" value="EM"/>
    <property type="resolution" value="3.56 A"/>
    <property type="chains" value="A/B/C/D=25-847"/>
</dbReference>
<dbReference type="PDB" id="8SS6">
    <property type="method" value="EM"/>
    <property type="resolution" value="3.01 A"/>
    <property type="chains" value="A/B/C/D=25-847"/>
</dbReference>
<dbReference type="PDB" id="8SS7">
    <property type="method" value="EM"/>
    <property type="resolution" value="2.76 A"/>
    <property type="chains" value="A/B/C/D=25-847"/>
</dbReference>
<dbReference type="PDB" id="8SS8">
    <property type="method" value="EM"/>
    <property type="resolution" value="2.81 A"/>
    <property type="chains" value="A/B/C/D=25-847"/>
</dbReference>
<dbReference type="PDB" id="8SS9">
    <property type="method" value="EM"/>
    <property type="resolution" value="2.72 A"/>
    <property type="chains" value="A/B/C/D=25-847"/>
</dbReference>
<dbReference type="PDB" id="8SSA">
    <property type="method" value="EM"/>
    <property type="resolution" value="3.88 A"/>
    <property type="chains" value="A/B/C/D=25-847"/>
</dbReference>
<dbReference type="PDB" id="8SSB">
    <property type="method" value="EM"/>
    <property type="resolution" value="3.66 A"/>
    <property type="chains" value="A/B/C/D=25-847"/>
</dbReference>
<dbReference type="PDB" id="8VJ6">
    <property type="method" value="EM"/>
    <property type="resolution" value="3.50 A"/>
    <property type="chains" value="A/B/C/D=25-842"/>
</dbReference>
<dbReference type="PDB" id="8VJ7">
    <property type="method" value="EM"/>
    <property type="resolution" value="4.85 A"/>
    <property type="chains" value="A/B/C/D=25-842"/>
</dbReference>
<dbReference type="PDBsum" id="1FTJ"/>
<dbReference type="PDBsum" id="1FTK"/>
<dbReference type="PDBsum" id="1FTL"/>
<dbReference type="PDBsum" id="1FTM"/>
<dbReference type="PDBsum" id="1FTO"/>
<dbReference type="PDBsum" id="1FW0"/>
<dbReference type="PDBsum" id="1GR2"/>
<dbReference type="PDBsum" id="1LB8"/>
<dbReference type="PDBsum" id="1LB9"/>
<dbReference type="PDBsum" id="1LBB"/>
<dbReference type="PDBsum" id="1LBC"/>
<dbReference type="PDBsum" id="1M5B"/>
<dbReference type="PDBsum" id="1M5C"/>
<dbReference type="PDBsum" id="1M5D"/>
<dbReference type="PDBsum" id="1M5E"/>
<dbReference type="PDBsum" id="1M5F"/>
<dbReference type="PDBsum" id="1MM6"/>
<dbReference type="PDBsum" id="1MM7"/>
<dbReference type="PDBsum" id="1MQD"/>
<dbReference type="PDBsum" id="1MQG"/>
<dbReference type="PDBsum" id="1MQH"/>
<dbReference type="PDBsum" id="1MQI"/>
<dbReference type="PDBsum" id="1MQJ"/>
<dbReference type="PDBsum" id="1MS7"/>
<dbReference type="PDBsum" id="1MXU"/>
<dbReference type="PDBsum" id="1MXV"/>
<dbReference type="PDBsum" id="1MXW"/>
<dbReference type="PDBsum" id="1MXX"/>
<dbReference type="PDBsum" id="1MXY"/>
<dbReference type="PDBsum" id="1MXZ"/>
<dbReference type="PDBsum" id="1MY0"/>
<dbReference type="PDBsum" id="1MY1"/>
<dbReference type="PDBsum" id="1MY2"/>
<dbReference type="PDBsum" id="1MY3"/>
<dbReference type="PDBsum" id="1MY4"/>
<dbReference type="PDBsum" id="1N0T"/>
<dbReference type="PDBsum" id="1NNK"/>
<dbReference type="PDBsum" id="1NNP"/>
<dbReference type="PDBsum" id="1P1N"/>
<dbReference type="PDBsum" id="1P1O"/>
<dbReference type="PDBsum" id="1P1Q"/>
<dbReference type="PDBsum" id="1P1U"/>
<dbReference type="PDBsum" id="1P1W"/>
<dbReference type="PDBsum" id="1SYH"/>
<dbReference type="PDBsum" id="1SYI"/>
<dbReference type="PDBsum" id="1WVJ"/>
<dbReference type="PDBsum" id="1XHY"/>
<dbReference type="PDBsum" id="2AIX"/>
<dbReference type="PDBsum" id="2AL4"/>
<dbReference type="PDBsum" id="2AL5"/>
<dbReference type="PDBsum" id="2ANJ"/>
<dbReference type="PDBsum" id="2CMO"/>
<dbReference type="PDBsum" id="2GFE"/>
<dbReference type="PDBsum" id="2I3V"/>
<dbReference type="PDBsum" id="2I3W"/>
<dbReference type="PDBsum" id="2P2A"/>
<dbReference type="PDBsum" id="2UXA"/>
<dbReference type="PDBsum" id="2XX7"/>
<dbReference type="PDBsum" id="2XX8"/>
<dbReference type="PDBsum" id="2XX9"/>
<dbReference type="PDBsum" id="2XXH"/>
<dbReference type="PDBsum" id="2XXI"/>
<dbReference type="PDBsum" id="3B6Q"/>
<dbReference type="PDBsum" id="3B6T"/>
<dbReference type="PDBsum" id="3B6W"/>
<dbReference type="PDBsum" id="3B7D"/>
<dbReference type="PDBsum" id="3BBR"/>
<dbReference type="PDBsum" id="3BFT"/>
<dbReference type="PDBsum" id="3BFU"/>
<dbReference type="PDBsum" id="3BKI"/>
<dbReference type="PDBsum" id="3DP6"/>
<dbReference type="PDBsum" id="3H03"/>
<dbReference type="PDBsum" id="3H06"/>
<dbReference type="PDBsum" id="3H5V"/>
<dbReference type="PDBsum" id="3H5W"/>
<dbReference type="PDBsum" id="3H6T"/>
<dbReference type="PDBsum" id="3H6U"/>
<dbReference type="PDBsum" id="3H6V"/>
<dbReference type="PDBsum" id="3H6W"/>
<dbReference type="PDBsum" id="3HSY"/>
<dbReference type="PDBsum" id="3IJO"/>
<dbReference type="PDBsum" id="3IJX"/>
<dbReference type="PDBsum" id="3IK6"/>
<dbReference type="PDBsum" id="3IL1"/>
<dbReference type="PDBsum" id="3ILT"/>
<dbReference type="PDBsum" id="3ILU"/>
<dbReference type="PDBsum" id="3KG2"/>
<dbReference type="PDBsum" id="3KGC"/>
<dbReference type="PDBsum" id="3LSF"/>
<dbReference type="PDBsum" id="3LSL"/>
<dbReference type="PDBsum" id="3M3L"/>
<dbReference type="PDBsum" id="3N6V"/>
<dbReference type="PDBsum" id="3O28"/>
<dbReference type="PDBsum" id="3O29"/>
<dbReference type="PDBsum" id="3O2A"/>
<dbReference type="PDBsum" id="3O2J"/>
<dbReference type="PDBsum" id="3O6G"/>
<dbReference type="PDBsum" id="3O6H"/>
<dbReference type="PDBsum" id="3O6I"/>
<dbReference type="PDBsum" id="3PD8"/>
<dbReference type="PDBsum" id="3PD9"/>
<dbReference type="PDBsum" id="3PMV"/>
<dbReference type="PDBsum" id="3PMW"/>
<dbReference type="PDBsum" id="3PMX"/>
<dbReference type="PDBsum" id="3RTF"/>
<dbReference type="PDBsum" id="3RTW"/>
<dbReference type="PDBsum" id="3T93"/>
<dbReference type="PDBsum" id="3T96"/>
<dbReference type="PDBsum" id="3T9H"/>
<dbReference type="PDBsum" id="3T9U"/>
<dbReference type="PDBsum" id="3T9V"/>
<dbReference type="PDBsum" id="3T9X"/>
<dbReference type="PDBsum" id="3TDJ"/>
<dbReference type="PDBsum" id="3TKD"/>
<dbReference type="PDBsum" id="3TZA"/>
<dbReference type="PDBsum" id="4FAT"/>
<dbReference type="PDBsum" id="4G8M"/>
<dbReference type="PDBsum" id="4GXS"/>
<dbReference type="PDBsum" id="4H8J"/>
<dbReference type="PDBsum" id="4IGT"/>
<dbReference type="PDBsum" id="4ISU"/>
<dbReference type="PDBsum" id="4IY5"/>
<dbReference type="PDBsum" id="4IY6"/>
<dbReference type="PDBsum" id="4L17"/>
<dbReference type="PDBsum" id="4LZ5"/>
<dbReference type="PDBsum" id="4LZ7"/>
<dbReference type="PDBsum" id="4LZ8"/>
<dbReference type="PDBsum" id="4N07"/>
<dbReference type="PDBsum" id="4O3A"/>
<dbReference type="PDBsum" id="4O3B"/>
<dbReference type="PDBsum" id="4O3C"/>
<dbReference type="PDBsum" id="4Q30"/>
<dbReference type="PDBsum" id="4U1O"/>
<dbReference type="PDBsum" id="4U1W"/>
<dbReference type="PDBsum" id="4U1X"/>
<dbReference type="PDBsum" id="4U1Y"/>
<dbReference type="PDBsum" id="4U1Z"/>
<dbReference type="PDBsum" id="4U21"/>
<dbReference type="PDBsum" id="4U22"/>
<dbReference type="PDBsum" id="4U23"/>
<dbReference type="PDBsum" id="4U2P"/>
<dbReference type="PDBsum" id="4U2Q"/>
<dbReference type="PDBsum" id="4U2R"/>
<dbReference type="PDBsum" id="4U4F"/>
<dbReference type="PDBsum" id="4U4G"/>
<dbReference type="PDBsum" id="4U4S"/>
<dbReference type="PDBsum" id="4U4X"/>
<dbReference type="PDBsum" id="4U5B"/>
<dbReference type="PDBsum" id="4U5C"/>
<dbReference type="PDBsum" id="4U5D"/>
<dbReference type="PDBsum" id="4U5E"/>
<dbReference type="PDBsum" id="4U5F"/>
<dbReference type="PDBsum" id="4UQ6"/>
<dbReference type="PDBsum" id="4UQJ"/>
<dbReference type="PDBsum" id="4UQK"/>
<dbReference type="PDBsum" id="4X48"/>
<dbReference type="PDBsum" id="4YMA"/>
<dbReference type="PDBsum" id="4YU0"/>
<dbReference type="PDBsum" id="4Z0I"/>
<dbReference type="PDBsum" id="5BUU"/>
<dbReference type="PDBsum" id="5CBR"/>
<dbReference type="PDBsum" id="5CBS"/>
<dbReference type="PDBsum" id="5ELV"/>
<dbReference type="PDBsum" id="5FHM"/>
<dbReference type="PDBsum" id="5FHN"/>
<dbReference type="PDBsum" id="5FHO"/>
<dbReference type="PDBsum" id="5FTH"/>
<dbReference type="PDBsum" id="5FTI"/>
<dbReference type="PDBsum" id="5FWX"/>
<dbReference type="PDBsum" id="5FWY"/>
<dbReference type="PDBsum" id="5IDE"/>
<dbReference type="PDBsum" id="5IDF"/>
<dbReference type="PDBsum" id="5JEI"/>
<dbReference type="PDBsum" id="5KBS"/>
<dbReference type="PDBsum" id="5KBT"/>
<dbReference type="PDBsum" id="5KBU"/>
<dbReference type="PDBsum" id="5KBV"/>
<dbReference type="PDBsum" id="5KK2"/>
<dbReference type="PDBsum" id="5L1B"/>
<dbReference type="PDBsum" id="5L1E"/>
<dbReference type="PDBsum" id="5L1F"/>
<dbReference type="PDBsum" id="5L1G"/>
<dbReference type="PDBsum" id="5L1H"/>
<dbReference type="PDBsum" id="5N6P"/>
<dbReference type="PDBsum" id="5NG9"/>
<dbReference type="PDBsum" id="5NIH"/>
<dbReference type="PDBsum" id="5NS9"/>
<dbReference type="PDBsum" id="5O9A"/>
<dbReference type="PDBsum" id="5OEW"/>
<dbReference type="PDBsum" id="5VHW"/>
<dbReference type="PDBsum" id="5VHX"/>
<dbReference type="PDBsum" id="5VHY"/>
<dbReference type="PDBsum" id="5VHZ"/>
<dbReference type="PDBsum" id="5VOT"/>
<dbReference type="PDBsum" id="5VOU"/>
<dbReference type="PDBsum" id="5VOV"/>
<dbReference type="PDBsum" id="5WEK"/>
<dbReference type="PDBsum" id="5WEL"/>
<dbReference type="PDBsum" id="5WEM"/>
<dbReference type="PDBsum" id="5WEN"/>
<dbReference type="PDBsum" id="5WEO"/>
<dbReference type="PDBsum" id="6DLZ"/>
<dbReference type="PDBsum" id="6DM0"/>
<dbReference type="PDBsum" id="6DM1"/>
<dbReference type="PDBsum" id="6FAZ"/>
<dbReference type="PDBsum" id="6FQG"/>
<dbReference type="PDBsum" id="6FQH"/>
<dbReference type="PDBsum" id="6FQI"/>
<dbReference type="PDBsum" id="6FQJ"/>
<dbReference type="PDBsum" id="6FQK"/>
<dbReference type="PDBsum" id="6GIV"/>
<dbReference type="PDBsum" id="6GL4"/>
<dbReference type="PDBsum" id="6HC9"/>
<dbReference type="PDBsum" id="6HCA"/>
<dbReference type="PDBsum" id="6HCB"/>
<dbReference type="PDBsum" id="6HCC"/>
<dbReference type="PDBsum" id="6HCH"/>
<dbReference type="PDBsum" id="6NJL"/>
<dbReference type="PDBsum" id="6NJM"/>
<dbReference type="PDBsum" id="6NJN"/>
<dbReference type="PDBsum" id="6O9G"/>
<dbReference type="PDBsum" id="6PEQ"/>
<dbReference type="PDBsum" id="6Q54"/>
<dbReference type="PDBsum" id="6Q60"/>
<dbReference type="PDBsum" id="6QKC"/>
<dbReference type="PDBsum" id="6QKZ"/>
<dbReference type="PDBsum" id="6RUQ"/>
<dbReference type="PDBsum" id="6U5S"/>
<dbReference type="PDBsum" id="6U6I"/>
<dbReference type="PDBsum" id="6UCB"/>
<dbReference type="PDBsum" id="6UD4"/>
<dbReference type="PDBsum" id="6UD8"/>
<dbReference type="PDBsum" id="6XSR"/>
<dbReference type="PDBsum" id="6YK2"/>
<dbReference type="PDBsum" id="6YK3"/>
<dbReference type="PDBsum" id="6YK4"/>
<dbReference type="PDBsum" id="6YK5"/>
<dbReference type="PDBsum" id="6YK6"/>
<dbReference type="PDBsum" id="6ZYU"/>
<dbReference type="PDBsum" id="7OCA"/>
<dbReference type="PDBsum" id="7OCC"/>
<dbReference type="PDBsum" id="7OCD"/>
<dbReference type="PDBsum" id="7OCE"/>
<dbReference type="PDBsum" id="7OCF"/>
<dbReference type="PDBsum" id="7QHB"/>
<dbReference type="PDBsum" id="7QHH"/>
<dbReference type="PDBsum" id="7RYY"/>
<dbReference type="PDBsum" id="7RYZ"/>
<dbReference type="PDBsum" id="7RZ4"/>
<dbReference type="PDBsum" id="7RZ5"/>
<dbReference type="PDBsum" id="7RZ6"/>
<dbReference type="PDBsum" id="7RZ7"/>
<dbReference type="PDBsum" id="7RZ8"/>
<dbReference type="PDBsum" id="7RZ9"/>
<dbReference type="PDBsum" id="7RZA"/>
<dbReference type="PDBsum" id="7TNJ"/>
<dbReference type="PDBsum" id="7TNK"/>
<dbReference type="PDBsum" id="7TNL"/>
<dbReference type="PDBsum" id="7TNM"/>
<dbReference type="PDBsum" id="7TNN"/>
<dbReference type="PDBsum" id="7TNO"/>
<dbReference type="PDBsum" id="7TNP"/>
<dbReference type="PDBsum" id="8AYL"/>
<dbReference type="PDBsum" id="8AYM"/>
<dbReference type="PDBsum" id="8AYN"/>
<dbReference type="PDBsum" id="8AYO"/>
<dbReference type="PDBsum" id="8C1R"/>
<dbReference type="PDBsum" id="8C1S"/>
<dbReference type="PDBsum" id="8FP4"/>
<dbReference type="PDBsum" id="8FP9"/>
<dbReference type="PDBsum" id="8FPC"/>
<dbReference type="PDBsum" id="8FPG"/>
<dbReference type="PDBsum" id="8FPH"/>
<dbReference type="PDBsum" id="8FPK"/>
<dbReference type="PDBsum" id="8FPL"/>
<dbReference type="PDBsum" id="8FPS"/>
<dbReference type="PDBsum" id="8FPV"/>
<dbReference type="PDBsum" id="8FPY"/>
<dbReference type="PDBsum" id="8FPZ"/>
<dbReference type="PDBsum" id="8FQ1"/>
<dbReference type="PDBsum" id="8FQ2"/>
<dbReference type="PDBsum" id="8FQ3"/>
<dbReference type="PDBsum" id="8FQ5"/>
<dbReference type="PDBsum" id="8FQ6"/>
<dbReference type="PDBsum" id="8FQ8"/>
<dbReference type="PDBsum" id="8FQA"/>
<dbReference type="PDBsum" id="8FQB"/>
<dbReference type="PDBsum" id="8FQD"/>
<dbReference type="PDBsum" id="8FQE"/>
<dbReference type="PDBsum" id="8FQF"/>
<dbReference type="PDBsum" id="8FQG"/>
<dbReference type="PDBsum" id="8FQH"/>
<dbReference type="PDBsum" id="8FR0"/>
<dbReference type="PDBsum" id="8P3Q"/>
<dbReference type="PDBsum" id="8P3S"/>
<dbReference type="PDBsum" id="8P3X"/>
<dbReference type="PDBsum" id="8P3Y"/>
<dbReference type="PDBsum" id="8P3Z"/>
<dbReference type="PDBsum" id="8QEZ"/>
<dbReference type="PDBsum" id="8SS2"/>
<dbReference type="PDBsum" id="8SS3"/>
<dbReference type="PDBsum" id="8SS4"/>
<dbReference type="PDBsum" id="8SS5"/>
<dbReference type="PDBsum" id="8SS6"/>
<dbReference type="PDBsum" id="8SS7"/>
<dbReference type="PDBsum" id="8SS8"/>
<dbReference type="PDBsum" id="8SS9"/>
<dbReference type="PDBsum" id="8SSA"/>
<dbReference type="PDBsum" id="8SSB"/>
<dbReference type="PDBsum" id="8VJ6"/>
<dbReference type="PDBsum" id="8VJ7"/>
<dbReference type="EMDB" id="EMD-12802"/>
<dbReference type="EMDB" id="EMD-12803"/>
<dbReference type="EMDB" id="EMD-12804"/>
<dbReference type="EMDB" id="EMD-12805"/>
<dbReference type="EMDB" id="EMD-12806"/>
<dbReference type="EMDB" id="EMD-13969"/>
<dbReference type="EMDB" id="EMD-13970"/>
<dbReference type="EMDB" id="EMD-13971"/>
<dbReference type="EMDB" id="EMD-13972"/>
<dbReference type="EMDB" id="EMD-13973"/>
<dbReference type="EMDB" id="EMD-13974"/>
<dbReference type="EMDB" id="EMD-15714"/>
<dbReference type="EMDB" id="EMD-15716"/>
<dbReference type="EMDB" id="EMD-15717"/>
<dbReference type="EMDB" id="EMD-15718"/>
<dbReference type="EMDB" id="EMD-16381"/>
<dbReference type="EMDB" id="EMD-16382"/>
<dbReference type="EMDB" id="EMD-17392"/>
<dbReference type="EMDB" id="EMD-17393"/>
<dbReference type="EMDB" id="EMD-17398"/>
<dbReference type="EMDB" id="EMD-17399"/>
<dbReference type="EMDB" id="EMD-17400"/>
<dbReference type="EMDB" id="EMD-20330"/>
<dbReference type="EMDB" id="EMD-20654"/>
<dbReference type="EMDB" id="EMD-20666"/>
<dbReference type="EMDB" id="EMD-20727"/>
<dbReference type="EMDB" id="EMD-20733"/>
<dbReference type="EMDB" id="EMD-20734"/>
<dbReference type="EMDB" id="EMD-24748"/>
<dbReference type="EMDB" id="EMD-24749"/>
<dbReference type="EMDB" id="EMD-24750"/>
<dbReference type="EMDB" id="EMD-24751"/>
<dbReference type="EMDB" id="EMD-24752"/>
<dbReference type="EMDB" id="EMD-24753"/>
<dbReference type="EMDB" id="EMD-24754"/>
<dbReference type="EMDB" id="EMD-24755"/>
<dbReference type="EMDB" id="EMD-24756"/>
<dbReference type="EMDB" id="EMD-26015"/>
<dbReference type="EMDB" id="EMD-26016"/>
<dbReference type="EMDB" id="EMD-2680"/>
<dbReference type="EMDB" id="EMD-2684"/>
<dbReference type="EMDB" id="EMD-2686"/>
<dbReference type="EMDB" id="EMD-2687"/>
<dbReference type="EMDB" id="EMD-2688"/>
<dbReference type="EMDB" id="EMD-2689"/>
<dbReference type="EMDB" id="EMD-29359"/>
<dbReference type="EMDB" id="EMD-29360"/>
<dbReference type="EMDB" id="EMD-29361"/>
<dbReference type="EMDB" id="EMD-29363"/>
<dbReference type="EMDB" id="EMD-29364"/>
<dbReference type="EMDB" id="EMD-29367"/>
<dbReference type="EMDB" id="EMD-29368"/>
<dbReference type="EMDB" id="EMD-29369"/>
<dbReference type="EMDB" id="EMD-29370"/>
<dbReference type="EMDB" id="EMD-29371"/>
<dbReference type="EMDB" id="EMD-29372"/>
<dbReference type="EMDB" id="EMD-29373"/>
<dbReference type="EMDB" id="EMD-29375"/>
<dbReference type="EMDB" id="EMD-29376"/>
<dbReference type="EMDB" id="EMD-29378"/>
<dbReference type="EMDB" id="EMD-29379"/>
<dbReference type="EMDB" id="EMD-29380"/>
<dbReference type="EMDB" id="EMD-29381"/>
<dbReference type="EMDB" id="EMD-29382"/>
<dbReference type="EMDB" id="EMD-29384"/>
<dbReference type="EMDB" id="EMD-29385"/>
<dbReference type="EMDB" id="EMD-29386"/>
<dbReference type="EMDB" id="EMD-29387"/>
<dbReference type="EMDB" id="EMD-29388"/>
<dbReference type="EMDB" id="EMD-29394"/>
<dbReference type="EMDB" id="EMD-43275"/>
<dbReference type="EMDB" id="EMD-43276"/>
<dbReference type="EMDB" id="EMD-44232"/>
<dbReference type="EMDB" id="EMD-44233"/>
<dbReference type="EMDB" id="EMD-44234"/>
<dbReference type="EMDB" id="EMD-44244"/>
<dbReference type="EMDB" id="EMD-44245"/>
<dbReference type="EMDB" id="EMD-44248"/>
<dbReference type="EMDB" id="EMD-44249"/>
<dbReference type="EMDB" id="EMD-44250"/>
<dbReference type="EMDB" id="EMD-44251"/>
<dbReference type="EMDB" id="EMD-4572"/>
<dbReference type="EMDB" id="EMD-4575"/>
<dbReference type="EMDB" id="EMD-8090"/>
<dbReference type="EMDB" id="EMD-8091"/>
<dbReference type="EMDB" id="EMD-8232"/>
<dbReference type="EMDB" id="EMD-8256"/>
<dbReference type="EMDB" id="EMD-8721"/>
<dbReference type="EMDB" id="EMD-8722"/>
<dbReference type="EMDB" id="EMD-8723"/>
<dbReference type="EMDB" id="EMD-9387"/>
<dbReference type="EMDB" id="EMD-9388"/>
<dbReference type="EMDB" id="EMD-9389"/>
<dbReference type="SASBDB" id="P19491"/>
<dbReference type="SMR" id="P19491"/>
<dbReference type="BioGRID" id="248250">
    <property type="interactions" value="22"/>
</dbReference>
<dbReference type="ComplexPortal" id="CPX-8766">
    <property type="entry name" value="GluA1-GluA2 AMPA receptor complex"/>
</dbReference>
<dbReference type="CORUM" id="P19491"/>
<dbReference type="DIP" id="DIP-30952N"/>
<dbReference type="ELM" id="P19491"/>
<dbReference type="FunCoup" id="P19491">
    <property type="interactions" value="668"/>
</dbReference>
<dbReference type="IntAct" id="P19491">
    <property type="interactions" value="31"/>
</dbReference>
<dbReference type="MINT" id="P19491"/>
<dbReference type="STRING" id="10116.ENSRNOP00000069094"/>
<dbReference type="BindingDB" id="P19491"/>
<dbReference type="ChEMBL" id="CHEMBL3503"/>
<dbReference type="DrugCentral" id="P19491"/>
<dbReference type="GuidetoPHARMACOLOGY" id="445"/>
<dbReference type="GlyCosmos" id="P19491">
    <property type="glycosylation" value="4 sites, No reported glycans"/>
</dbReference>
<dbReference type="GlyGen" id="P19491">
    <property type="glycosylation" value="5 sites, 1 O-linked glycan (1 site)"/>
</dbReference>
<dbReference type="iPTMnet" id="P19491"/>
<dbReference type="PhosphoSitePlus" id="P19491"/>
<dbReference type="SwissPalm" id="P19491"/>
<dbReference type="PaxDb" id="10116-ENSRNOP00000032937"/>
<dbReference type="ABCD" id="P19491">
    <property type="antibodies" value="2 sequenced antibodies"/>
</dbReference>
<dbReference type="GeneID" id="29627"/>
<dbReference type="KEGG" id="rno:29627"/>
<dbReference type="UCSC" id="RGD:61862">
    <molecule id="P19491-1"/>
    <property type="organism name" value="rat"/>
</dbReference>
<dbReference type="AGR" id="RGD:61862"/>
<dbReference type="CTD" id="2891"/>
<dbReference type="RGD" id="61862">
    <property type="gene designation" value="Gria2"/>
</dbReference>
<dbReference type="eggNOG" id="KOG1054">
    <property type="taxonomic scope" value="Eukaryota"/>
</dbReference>
<dbReference type="InParanoid" id="P19491"/>
<dbReference type="OrthoDB" id="18886at9989"/>
<dbReference type="PhylomeDB" id="P19491"/>
<dbReference type="Reactome" id="R-RNO-399710">
    <property type="pathway name" value="Activation of AMPA receptors"/>
</dbReference>
<dbReference type="Reactome" id="R-RNO-416993">
    <property type="pathway name" value="Trafficking of GluR2-containing AMPA receptors"/>
</dbReference>
<dbReference type="Reactome" id="R-RNO-438066">
    <property type="pathway name" value="Unblocking of NMDA receptors, glutamate binding and activation"/>
</dbReference>
<dbReference type="EvolutionaryTrace" id="P19491"/>
<dbReference type="PRO" id="PR:P19491"/>
<dbReference type="Proteomes" id="UP000002494">
    <property type="component" value="Unplaced"/>
</dbReference>
<dbReference type="GO" id="GO:0032281">
    <property type="term" value="C:AMPA glutamate receptor complex"/>
    <property type="evidence" value="ECO:0000314"/>
    <property type="project" value="UniProtKB"/>
</dbReference>
<dbReference type="GO" id="GO:0032279">
    <property type="term" value="C:asymmetric synapse"/>
    <property type="evidence" value="ECO:0000314"/>
    <property type="project" value="ARUK-UCL"/>
</dbReference>
<dbReference type="GO" id="GO:0030424">
    <property type="term" value="C:axon"/>
    <property type="evidence" value="ECO:0000314"/>
    <property type="project" value="RGD"/>
</dbReference>
<dbReference type="GO" id="GO:0009986">
    <property type="term" value="C:cell surface"/>
    <property type="evidence" value="ECO:0000314"/>
    <property type="project" value="RGD"/>
</dbReference>
<dbReference type="GO" id="GO:0030425">
    <property type="term" value="C:dendrite"/>
    <property type="evidence" value="ECO:0000314"/>
    <property type="project" value="ARUK-UCL"/>
</dbReference>
<dbReference type="GO" id="GO:0032839">
    <property type="term" value="C:dendrite cytoplasm"/>
    <property type="evidence" value="ECO:0000314"/>
    <property type="project" value="RGD"/>
</dbReference>
<dbReference type="GO" id="GO:0032590">
    <property type="term" value="C:dendrite membrane"/>
    <property type="evidence" value="ECO:0000314"/>
    <property type="project" value="RGD"/>
</dbReference>
<dbReference type="GO" id="GO:0043198">
    <property type="term" value="C:dendritic shaft"/>
    <property type="evidence" value="ECO:0000314"/>
    <property type="project" value="UniProtKB"/>
</dbReference>
<dbReference type="GO" id="GO:0043197">
    <property type="term" value="C:dendritic spine"/>
    <property type="evidence" value="ECO:0000314"/>
    <property type="project" value="UniProtKB"/>
</dbReference>
<dbReference type="GO" id="GO:0044327">
    <property type="term" value="C:dendritic spine head"/>
    <property type="evidence" value="ECO:0000314"/>
    <property type="project" value="RGD"/>
</dbReference>
<dbReference type="GO" id="GO:0044326">
    <property type="term" value="C:dendritic spine neck"/>
    <property type="evidence" value="ECO:0000314"/>
    <property type="project" value="RGD"/>
</dbReference>
<dbReference type="GO" id="GO:0005783">
    <property type="term" value="C:endoplasmic reticulum"/>
    <property type="evidence" value="ECO:0000266"/>
    <property type="project" value="RGD"/>
</dbReference>
<dbReference type="GO" id="GO:0009897">
    <property type="term" value="C:external side of plasma membrane"/>
    <property type="evidence" value="ECO:0000314"/>
    <property type="project" value="RGD"/>
</dbReference>
<dbReference type="GO" id="GO:0098978">
    <property type="term" value="C:glutamatergic synapse"/>
    <property type="evidence" value="ECO:0000314"/>
    <property type="project" value="SynGO"/>
</dbReference>
<dbReference type="GO" id="GO:0030426">
    <property type="term" value="C:growth cone"/>
    <property type="evidence" value="ECO:0000314"/>
    <property type="project" value="RGD"/>
</dbReference>
<dbReference type="GO" id="GO:0008328">
    <property type="term" value="C:ionotropic glutamate receptor complex"/>
    <property type="evidence" value="ECO:0000304"/>
    <property type="project" value="UniProtKB"/>
</dbReference>
<dbReference type="GO" id="GO:0016020">
    <property type="term" value="C:membrane"/>
    <property type="evidence" value="ECO:0000266"/>
    <property type="project" value="RGD"/>
</dbReference>
<dbReference type="GO" id="GO:0043005">
    <property type="term" value="C:neuron projection"/>
    <property type="evidence" value="ECO:0000266"/>
    <property type="project" value="RGD"/>
</dbReference>
<dbReference type="GO" id="GO:0043025">
    <property type="term" value="C:neuronal cell body"/>
    <property type="evidence" value="ECO:0000314"/>
    <property type="project" value="UniProtKB"/>
</dbReference>
<dbReference type="GO" id="GO:0043204">
    <property type="term" value="C:perikaryon"/>
    <property type="evidence" value="ECO:0000314"/>
    <property type="project" value="RGD"/>
</dbReference>
<dbReference type="GO" id="GO:0099544">
    <property type="term" value="C:perisynaptic space"/>
    <property type="evidence" value="ECO:0000266"/>
    <property type="project" value="RGD"/>
</dbReference>
<dbReference type="GO" id="GO:0005886">
    <property type="term" value="C:plasma membrane"/>
    <property type="evidence" value="ECO:0000314"/>
    <property type="project" value="UniProtKB"/>
</dbReference>
<dbReference type="GO" id="GO:0014069">
    <property type="term" value="C:postsynaptic density"/>
    <property type="evidence" value="ECO:0000314"/>
    <property type="project" value="ARUK-UCL"/>
</dbReference>
<dbReference type="GO" id="GO:0098839">
    <property type="term" value="C:postsynaptic density membrane"/>
    <property type="evidence" value="ECO:0000314"/>
    <property type="project" value="SynGO"/>
</dbReference>
<dbReference type="GO" id="GO:0045211">
    <property type="term" value="C:postsynaptic membrane"/>
    <property type="evidence" value="ECO:0000314"/>
    <property type="project" value="SynGO"/>
</dbReference>
<dbReference type="GO" id="GO:0098793">
    <property type="term" value="C:presynapse"/>
    <property type="evidence" value="ECO:0000314"/>
    <property type="project" value="RGD"/>
</dbReference>
<dbReference type="GO" id="GO:0048787">
    <property type="term" value="C:presynaptic active zone membrane"/>
    <property type="evidence" value="ECO:0000314"/>
    <property type="project" value="SynGO"/>
</dbReference>
<dbReference type="GO" id="GO:0042734">
    <property type="term" value="C:presynaptic membrane"/>
    <property type="evidence" value="ECO:0000314"/>
    <property type="project" value="RGD"/>
</dbReference>
<dbReference type="GO" id="GO:0032991">
    <property type="term" value="C:protein-containing complex"/>
    <property type="evidence" value="ECO:0000314"/>
    <property type="project" value="RGD"/>
</dbReference>
<dbReference type="GO" id="GO:0098685">
    <property type="term" value="C:Schaffer collateral - CA1 synapse"/>
    <property type="evidence" value="ECO:0000314"/>
    <property type="project" value="SynGO"/>
</dbReference>
<dbReference type="GO" id="GO:0036477">
    <property type="term" value="C:somatodendritic compartment"/>
    <property type="evidence" value="ECO:0000266"/>
    <property type="project" value="RGD"/>
</dbReference>
<dbReference type="GO" id="GO:0106033">
    <property type="term" value="C:spine synapse"/>
    <property type="evidence" value="ECO:0000314"/>
    <property type="project" value="RGD"/>
</dbReference>
<dbReference type="GO" id="GO:0045202">
    <property type="term" value="C:synapse"/>
    <property type="evidence" value="ECO:0000314"/>
    <property type="project" value="UniProtKB"/>
</dbReference>
<dbReference type="GO" id="GO:0097060">
    <property type="term" value="C:synaptic membrane"/>
    <property type="evidence" value="ECO:0000314"/>
    <property type="project" value="RGD"/>
</dbReference>
<dbReference type="GO" id="GO:0008021">
    <property type="term" value="C:synaptic vesicle"/>
    <property type="evidence" value="ECO:0000266"/>
    <property type="project" value="RGD"/>
</dbReference>
<dbReference type="GO" id="GO:0030672">
    <property type="term" value="C:synaptic vesicle membrane"/>
    <property type="evidence" value="ECO:0000314"/>
    <property type="project" value="RGD"/>
</dbReference>
<dbReference type="GO" id="GO:0043195">
    <property type="term" value="C:terminal bouton"/>
    <property type="evidence" value="ECO:0000314"/>
    <property type="project" value="RGD"/>
</dbReference>
<dbReference type="GO" id="GO:0004971">
    <property type="term" value="F:AMPA glutamate receptor activity"/>
    <property type="evidence" value="ECO:0000314"/>
    <property type="project" value="UniProtKB"/>
</dbReference>
<dbReference type="GO" id="GO:0001540">
    <property type="term" value="F:amyloid-beta binding"/>
    <property type="evidence" value="ECO:0000353"/>
    <property type="project" value="ARUK-UCL"/>
</dbReference>
<dbReference type="GO" id="GO:0008092">
    <property type="term" value="F:cytoskeletal protein binding"/>
    <property type="evidence" value="ECO:0000353"/>
    <property type="project" value="RGD"/>
</dbReference>
<dbReference type="GO" id="GO:0005230">
    <property type="term" value="F:extracellular ligand-gated monoatomic ion channel activity"/>
    <property type="evidence" value="ECO:0000314"/>
    <property type="project" value="UniProtKB"/>
</dbReference>
<dbReference type="GO" id="GO:0005234">
    <property type="term" value="F:extracellularly glutamate-gated ion channel activity"/>
    <property type="evidence" value="ECO:0000266"/>
    <property type="project" value="RGD"/>
</dbReference>
<dbReference type="GO" id="GO:0035254">
    <property type="term" value="F:glutamate receptor binding"/>
    <property type="evidence" value="ECO:0000353"/>
    <property type="project" value="UniProtKB"/>
</dbReference>
<dbReference type="GO" id="GO:0022849">
    <property type="term" value="F:glutamate-gated calcium ion channel activity"/>
    <property type="evidence" value="ECO:0000314"/>
    <property type="project" value="UniProtKB"/>
</dbReference>
<dbReference type="GO" id="GO:0004970">
    <property type="term" value="F:glutamate-gated receptor activity"/>
    <property type="evidence" value="ECO:0000314"/>
    <property type="project" value="UniProtKB"/>
</dbReference>
<dbReference type="GO" id="GO:0042802">
    <property type="term" value="F:identical protein binding"/>
    <property type="evidence" value="ECO:0000353"/>
    <property type="project" value="IntAct"/>
</dbReference>
<dbReference type="GO" id="GO:0019865">
    <property type="term" value="F:immunoglobulin binding"/>
    <property type="evidence" value="ECO:0000353"/>
    <property type="project" value="UniProtKB"/>
</dbReference>
<dbReference type="GO" id="GO:0035255">
    <property type="term" value="F:ionotropic glutamate receptor binding"/>
    <property type="evidence" value="ECO:0000353"/>
    <property type="project" value="RGD"/>
</dbReference>
<dbReference type="GO" id="GO:0015277">
    <property type="term" value="F:kainate selective glutamate receptor activity"/>
    <property type="evidence" value="ECO:0000314"/>
    <property type="project" value="UniProtKB"/>
</dbReference>
<dbReference type="GO" id="GO:0099094">
    <property type="term" value="F:ligand-gated monoatomic cation channel activity"/>
    <property type="evidence" value="ECO:0000314"/>
    <property type="project" value="UniProtKB"/>
</dbReference>
<dbReference type="GO" id="GO:0099507">
    <property type="term" value="F:ligand-gated monoatomic ion channel activity involved in regulation of presynaptic membrane potential"/>
    <property type="evidence" value="ECO:0000314"/>
    <property type="project" value="SynGO"/>
</dbReference>
<dbReference type="GO" id="GO:0030165">
    <property type="term" value="F:PDZ domain binding"/>
    <property type="evidence" value="ECO:0000314"/>
    <property type="project" value="UniProtKB"/>
</dbReference>
<dbReference type="GO" id="GO:0019901">
    <property type="term" value="F:protein kinase binding"/>
    <property type="evidence" value="ECO:0000353"/>
    <property type="project" value="RGD"/>
</dbReference>
<dbReference type="GO" id="GO:0044877">
    <property type="term" value="F:protein-containing complex binding"/>
    <property type="evidence" value="ECO:0000353"/>
    <property type="project" value="RGD"/>
</dbReference>
<dbReference type="GO" id="GO:0097110">
    <property type="term" value="F:scaffold protein binding"/>
    <property type="evidence" value="ECO:0000353"/>
    <property type="project" value="RGD"/>
</dbReference>
<dbReference type="GO" id="GO:0038023">
    <property type="term" value="F:signaling receptor activity"/>
    <property type="evidence" value="ECO:0000314"/>
    <property type="project" value="UniProtKB"/>
</dbReference>
<dbReference type="GO" id="GO:0000149">
    <property type="term" value="F:SNARE binding"/>
    <property type="evidence" value="ECO:0000353"/>
    <property type="project" value="UniProtKB"/>
</dbReference>
<dbReference type="GO" id="GO:1904315">
    <property type="term" value="F:transmitter-gated monoatomic ion channel activity involved in regulation of postsynaptic membrane potential"/>
    <property type="evidence" value="ECO:0000314"/>
    <property type="project" value="SynGO"/>
</dbReference>
<dbReference type="GO" id="GO:0071418">
    <property type="term" value="P:cellular response to amine stimulus"/>
    <property type="evidence" value="ECO:0000270"/>
    <property type="project" value="RGD"/>
</dbReference>
<dbReference type="GO" id="GO:1990416">
    <property type="term" value="P:cellular response to brain-derived neurotrophic factor stimulus"/>
    <property type="evidence" value="ECO:0000314"/>
    <property type="project" value="RGD"/>
</dbReference>
<dbReference type="GO" id="GO:1905430">
    <property type="term" value="P:cellular response to glycine"/>
    <property type="evidence" value="ECO:0000314"/>
    <property type="project" value="RGD"/>
</dbReference>
<dbReference type="GO" id="GO:0021987">
    <property type="term" value="P:cerebral cortex development"/>
    <property type="evidence" value="ECO:0000270"/>
    <property type="project" value="RGD"/>
</dbReference>
<dbReference type="GO" id="GO:0007268">
    <property type="term" value="P:chemical synaptic transmission"/>
    <property type="evidence" value="ECO:0000314"/>
    <property type="project" value="RGD"/>
</dbReference>
<dbReference type="GO" id="GO:1990708">
    <property type="term" value="P:conditioned place preference"/>
    <property type="evidence" value="ECO:0000315"/>
    <property type="project" value="RGD"/>
</dbReference>
<dbReference type="GO" id="GO:0045184">
    <property type="term" value="P:establishment of protein localization"/>
    <property type="evidence" value="ECO:0000315"/>
    <property type="project" value="UniProtKB"/>
</dbReference>
<dbReference type="GO" id="GO:0035235">
    <property type="term" value="P:ionotropic glutamate receptor signaling pathway"/>
    <property type="evidence" value="ECO:0000250"/>
    <property type="project" value="UniProtKB"/>
</dbReference>
<dbReference type="GO" id="GO:0050804">
    <property type="term" value="P:modulation of chemical synaptic transmission"/>
    <property type="evidence" value="ECO:0000318"/>
    <property type="project" value="GO_Central"/>
</dbReference>
<dbReference type="GO" id="GO:0050806">
    <property type="term" value="P:positive regulation of synaptic transmission"/>
    <property type="evidence" value="ECO:0000315"/>
    <property type="project" value="UniProtKB"/>
</dbReference>
<dbReference type="GO" id="GO:0051262">
    <property type="term" value="P:protein tetramerization"/>
    <property type="evidence" value="ECO:0000314"/>
    <property type="project" value="UniProtKB"/>
</dbReference>
<dbReference type="GO" id="GO:0031623">
    <property type="term" value="P:receptor internalization"/>
    <property type="evidence" value="ECO:0000314"/>
    <property type="project" value="UniProtKB"/>
</dbReference>
<dbReference type="GO" id="GO:1900452">
    <property type="term" value="P:regulation of long-term synaptic depression"/>
    <property type="evidence" value="ECO:0000315"/>
    <property type="project" value="RGD"/>
</dbReference>
<dbReference type="GO" id="GO:0001919">
    <property type="term" value="P:regulation of receptor recycling"/>
    <property type="evidence" value="ECO:0000315"/>
    <property type="project" value="UniProtKB"/>
</dbReference>
<dbReference type="GO" id="GO:0051966">
    <property type="term" value="P:regulation of synaptic transmission, glutamatergic"/>
    <property type="evidence" value="ECO:0000315"/>
    <property type="project" value="UniProtKB"/>
</dbReference>
<dbReference type="GO" id="GO:0060992">
    <property type="term" value="P:response to fungicide"/>
    <property type="evidence" value="ECO:0000270"/>
    <property type="project" value="RGD"/>
</dbReference>
<dbReference type="GO" id="GO:0010226">
    <property type="term" value="P:response to lithium ion"/>
    <property type="evidence" value="ECO:0000270"/>
    <property type="project" value="UniProtKB"/>
</dbReference>
<dbReference type="GO" id="GO:0035249">
    <property type="term" value="P:synaptic transmission, glutamatergic"/>
    <property type="evidence" value="ECO:0000318"/>
    <property type="project" value="GO_Central"/>
</dbReference>
<dbReference type="CDD" id="cd06389">
    <property type="entry name" value="PBP1_iGluR_AMPA_GluR2"/>
    <property type="match status" value="1"/>
</dbReference>
<dbReference type="CDD" id="cd13715">
    <property type="entry name" value="PBP2_iGluR_AMPA"/>
    <property type="match status" value="1"/>
</dbReference>
<dbReference type="FunFam" id="1.10.287.70:FF:000067">
    <property type="entry name" value="glutamate receptor 2 isoform X1"/>
    <property type="match status" value="1"/>
</dbReference>
<dbReference type="FunFam" id="1.10.287.70:FF:000099">
    <property type="entry name" value="glutamate receptor 2 isoform X1"/>
    <property type="match status" value="1"/>
</dbReference>
<dbReference type="FunFam" id="3.40.190.10:FF:000001">
    <property type="entry name" value="Glutamate receptor ionotropic, kainate 2"/>
    <property type="match status" value="1"/>
</dbReference>
<dbReference type="FunFam" id="3.40.50.2300:FF:000004">
    <property type="entry name" value="Glutamate receptor, ionotropic, AMPA 2"/>
    <property type="match status" value="1"/>
</dbReference>
<dbReference type="FunFam" id="3.40.190.10:FF:000666">
    <property type="entry name" value="Glutamate receptor, ionotropic, AMPA 2a"/>
    <property type="match status" value="1"/>
</dbReference>
<dbReference type="Gene3D" id="1.10.287.70">
    <property type="match status" value="2"/>
</dbReference>
<dbReference type="Gene3D" id="3.40.50.2300">
    <property type="match status" value="2"/>
</dbReference>
<dbReference type="Gene3D" id="3.40.190.10">
    <property type="entry name" value="Periplasmic binding protein-like II"/>
    <property type="match status" value="2"/>
</dbReference>
<dbReference type="InterPro" id="IPR001828">
    <property type="entry name" value="ANF_lig-bd_rcpt"/>
</dbReference>
<dbReference type="InterPro" id="IPR019594">
    <property type="entry name" value="Glu/Gly-bd"/>
</dbReference>
<dbReference type="InterPro" id="IPR001508">
    <property type="entry name" value="Iono_Glu_rcpt_met"/>
</dbReference>
<dbReference type="InterPro" id="IPR015683">
    <property type="entry name" value="Ionotropic_Glu_rcpt"/>
</dbReference>
<dbReference type="InterPro" id="IPR001320">
    <property type="entry name" value="Iontro_rcpt_C"/>
</dbReference>
<dbReference type="InterPro" id="IPR028082">
    <property type="entry name" value="Peripla_BP_I"/>
</dbReference>
<dbReference type="PANTHER" id="PTHR18966">
    <property type="entry name" value="IONOTROPIC GLUTAMATE RECEPTOR"/>
    <property type="match status" value="1"/>
</dbReference>
<dbReference type="Pfam" id="PF01094">
    <property type="entry name" value="ANF_receptor"/>
    <property type="match status" value="1"/>
</dbReference>
<dbReference type="Pfam" id="PF00060">
    <property type="entry name" value="Lig_chan"/>
    <property type="match status" value="1"/>
</dbReference>
<dbReference type="Pfam" id="PF10613">
    <property type="entry name" value="Lig_chan-Glu_bd"/>
    <property type="match status" value="1"/>
</dbReference>
<dbReference type="PRINTS" id="PR00177">
    <property type="entry name" value="NMDARECEPTOR"/>
</dbReference>
<dbReference type="SMART" id="SM00918">
    <property type="entry name" value="Lig_chan-Glu_bd"/>
    <property type="match status" value="1"/>
</dbReference>
<dbReference type="SMART" id="SM00079">
    <property type="entry name" value="PBPe"/>
    <property type="match status" value="1"/>
</dbReference>
<dbReference type="SUPFAM" id="SSF53822">
    <property type="entry name" value="Periplasmic binding protein-like I"/>
    <property type="match status" value="1"/>
</dbReference>
<dbReference type="SUPFAM" id="SSF53850">
    <property type="entry name" value="Periplasmic binding protein-like II"/>
    <property type="match status" value="1"/>
</dbReference>
<dbReference type="SUPFAM" id="SSF81324">
    <property type="entry name" value="Voltage-gated potassium channels"/>
    <property type="match status" value="1"/>
</dbReference>
<evidence type="ECO:0000250" key="1"/>
<evidence type="ECO:0000250" key="2">
    <source>
        <dbReference type="UniProtKB" id="P23819"/>
    </source>
</evidence>
<evidence type="ECO:0000250" key="3">
    <source>
        <dbReference type="UniProtKB" id="P42262"/>
    </source>
</evidence>
<evidence type="ECO:0000255" key="4"/>
<evidence type="ECO:0000269" key="5">
    <source>
    </source>
</evidence>
<evidence type="ECO:0000269" key="6">
    <source>
    </source>
</evidence>
<evidence type="ECO:0000269" key="7">
    <source>
    </source>
</evidence>
<evidence type="ECO:0000269" key="8">
    <source>
    </source>
</evidence>
<evidence type="ECO:0000269" key="9">
    <source>
    </source>
</evidence>
<evidence type="ECO:0000269" key="10">
    <source>
    </source>
</evidence>
<evidence type="ECO:0000269" key="11">
    <source>
    </source>
</evidence>
<evidence type="ECO:0000269" key="12">
    <source>
    </source>
</evidence>
<evidence type="ECO:0000269" key="13">
    <source>
    </source>
</evidence>
<evidence type="ECO:0000269" key="14">
    <source>
    </source>
</evidence>
<evidence type="ECO:0000269" key="15">
    <source>
    </source>
</evidence>
<evidence type="ECO:0000269" key="16">
    <source>
    </source>
</evidence>
<evidence type="ECO:0000269" key="17">
    <source>
    </source>
</evidence>
<evidence type="ECO:0000269" key="18">
    <source>
    </source>
</evidence>
<evidence type="ECO:0000269" key="19">
    <source>
    </source>
</evidence>
<evidence type="ECO:0000269" key="20">
    <source>
    </source>
</evidence>
<evidence type="ECO:0000269" key="21">
    <source>
    </source>
</evidence>
<evidence type="ECO:0000269" key="22">
    <source>
    </source>
</evidence>
<evidence type="ECO:0000269" key="23">
    <source>
    </source>
</evidence>
<evidence type="ECO:0000269" key="24">
    <source>
    </source>
</evidence>
<evidence type="ECO:0000269" key="25">
    <source>
    </source>
</evidence>
<evidence type="ECO:0000269" key="26">
    <source>
    </source>
</evidence>
<evidence type="ECO:0000269" key="27">
    <source>
    </source>
</evidence>
<evidence type="ECO:0000269" key="28">
    <source>
    </source>
</evidence>
<evidence type="ECO:0000269" key="29">
    <source>
    </source>
</evidence>
<evidence type="ECO:0000269" key="30">
    <source>
    </source>
</evidence>
<evidence type="ECO:0000269" key="31">
    <source>
    </source>
</evidence>
<evidence type="ECO:0000269" key="32">
    <source>
    </source>
</evidence>
<evidence type="ECO:0000269" key="33">
    <source>
    </source>
</evidence>
<evidence type="ECO:0000269" key="34">
    <source>
    </source>
</evidence>
<evidence type="ECO:0000269" key="35">
    <source>
    </source>
</evidence>
<evidence type="ECO:0000269" key="36">
    <source>
    </source>
</evidence>
<evidence type="ECO:0000269" key="37">
    <source>
    </source>
</evidence>
<evidence type="ECO:0000269" key="38">
    <source>
    </source>
</evidence>
<evidence type="ECO:0000269" key="39">
    <source>
    </source>
</evidence>
<evidence type="ECO:0000269" key="40">
    <source>
    </source>
</evidence>
<evidence type="ECO:0000303" key="41">
    <source>
    </source>
</evidence>
<evidence type="ECO:0000303" key="42">
    <source>
    </source>
</evidence>
<evidence type="ECO:0000303" key="43">
    <source>
    </source>
</evidence>
<evidence type="ECO:0000303" key="44">
    <source>
    </source>
</evidence>
<evidence type="ECO:0000303" key="45">
    <source>
    </source>
</evidence>
<evidence type="ECO:0000305" key="46"/>
<evidence type="ECO:0000305" key="47">
    <source>
    </source>
</evidence>
<evidence type="ECO:0000305" key="48">
    <source>
    </source>
</evidence>
<evidence type="ECO:0000312" key="49">
    <source>
        <dbReference type="RGD" id="61862"/>
    </source>
</evidence>
<evidence type="ECO:0007744" key="50">
    <source>
        <dbReference type="PDB" id="1FTJ"/>
    </source>
</evidence>
<evidence type="ECO:0007744" key="51">
    <source>
        <dbReference type="PDB" id="1FTK"/>
    </source>
</evidence>
<evidence type="ECO:0007744" key="52">
    <source>
        <dbReference type="PDB" id="1FTL"/>
    </source>
</evidence>
<evidence type="ECO:0007744" key="53">
    <source>
        <dbReference type="PDB" id="1FTM"/>
    </source>
</evidence>
<evidence type="ECO:0007744" key="54">
    <source>
        <dbReference type="PDB" id="1FTO"/>
    </source>
</evidence>
<evidence type="ECO:0007744" key="55">
    <source>
        <dbReference type="PDB" id="1FW0"/>
    </source>
</evidence>
<evidence type="ECO:0007744" key="56">
    <source>
        <dbReference type="PDB" id="1GR2"/>
    </source>
</evidence>
<evidence type="ECO:0007744" key="57">
    <source>
        <dbReference type="PDB" id="1LB8"/>
    </source>
</evidence>
<evidence type="ECO:0007744" key="58">
    <source>
        <dbReference type="PDB" id="1LB9"/>
    </source>
</evidence>
<evidence type="ECO:0007744" key="59">
    <source>
        <dbReference type="PDB" id="1LBB"/>
    </source>
</evidence>
<evidence type="ECO:0007744" key="60">
    <source>
        <dbReference type="PDB" id="1LBC"/>
    </source>
</evidence>
<evidence type="ECO:0007744" key="61">
    <source>
        <dbReference type="PDB" id="1M5B"/>
    </source>
</evidence>
<evidence type="ECO:0007744" key="62">
    <source>
        <dbReference type="PDB" id="1M5C"/>
    </source>
</evidence>
<evidence type="ECO:0007744" key="63">
    <source>
        <dbReference type="PDB" id="1M5D"/>
    </source>
</evidence>
<evidence type="ECO:0007744" key="64">
    <source>
        <dbReference type="PDB" id="1M5E"/>
    </source>
</evidence>
<evidence type="ECO:0007744" key="65">
    <source>
        <dbReference type="PDB" id="1M5F"/>
    </source>
</evidence>
<evidence type="ECO:0007744" key="66">
    <source>
        <dbReference type="PDB" id="1MM6"/>
    </source>
</evidence>
<evidence type="ECO:0007744" key="67">
    <source>
        <dbReference type="PDB" id="1MM7"/>
    </source>
</evidence>
<evidence type="ECO:0007744" key="68">
    <source>
        <dbReference type="PDB" id="1MQG"/>
    </source>
</evidence>
<evidence type="ECO:0007744" key="69">
    <source>
        <dbReference type="PDB" id="1MQH"/>
    </source>
</evidence>
<evidence type="ECO:0007744" key="70">
    <source>
        <dbReference type="PDB" id="1MQI"/>
    </source>
</evidence>
<evidence type="ECO:0007744" key="71">
    <source>
        <dbReference type="PDB" id="1MQJ"/>
    </source>
</evidence>
<evidence type="ECO:0007744" key="72">
    <source>
        <dbReference type="PDB" id="1NNK"/>
    </source>
</evidence>
<evidence type="ECO:0007744" key="73">
    <source>
        <dbReference type="PDB" id="1NNP"/>
    </source>
</evidence>
<evidence type="ECO:0007744" key="74">
    <source>
        <dbReference type="PDB" id="1P1N"/>
    </source>
</evidence>
<evidence type="ECO:0007744" key="75">
    <source>
        <dbReference type="PDB" id="1P1O"/>
    </source>
</evidence>
<evidence type="ECO:0007744" key="76">
    <source>
        <dbReference type="PDB" id="1P1Q"/>
    </source>
</evidence>
<evidence type="ECO:0007744" key="77">
    <source>
        <dbReference type="PDB" id="1P1U"/>
    </source>
</evidence>
<evidence type="ECO:0007744" key="78">
    <source>
        <dbReference type="PDB" id="1P1W"/>
    </source>
</evidence>
<evidence type="ECO:0007744" key="79">
    <source>
        <dbReference type="PDB" id="2AL4"/>
    </source>
</evidence>
<evidence type="ECO:0007744" key="80">
    <source>
        <dbReference type="PDB" id="2AL5"/>
    </source>
</evidence>
<evidence type="ECO:0007744" key="81">
    <source>
        <dbReference type="PDB" id="2CMO"/>
    </source>
</evidence>
<evidence type="ECO:0007744" key="82">
    <source>
        <dbReference type="PDB" id="2I3V"/>
    </source>
</evidence>
<evidence type="ECO:0007744" key="83">
    <source>
        <dbReference type="PDB" id="2I3W"/>
    </source>
</evidence>
<evidence type="ECO:0007744" key="84">
    <source>
        <dbReference type="PDB" id="3HSY"/>
    </source>
</evidence>
<evidence type="ECO:0007744" key="85">
    <source>
        <dbReference type="PDB" id="3KG2"/>
    </source>
</evidence>
<evidence type="ECO:0007744" key="86">
    <source>
        <dbReference type="PDB" id="3KGC"/>
    </source>
</evidence>
<evidence type="ECO:0007744" key="87">
    <source>
        <dbReference type="PDB" id="3N6V"/>
    </source>
</evidence>
<evidence type="ECO:0007744" key="88">
    <source>
        <dbReference type="PDB" id="3O2J"/>
    </source>
</evidence>
<evidence type="ECO:0007744" key="89">
    <source>
        <dbReference type="PDB" id="3T93"/>
    </source>
</evidence>
<evidence type="ECO:0007744" key="90">
    <source>
        <dbReference type="PDB" id="3T96"/>
    </source>
</evidence>
<evidence type="ECO:0007744" key="91">
    <source>
        <dbReference type="PDB" id="3T9H"/>
    </source>
</evidence>
<evidence type="ECO:0007744" key="92">
    <source>
        <dbReference type="PDB" id="3T9U"/>
    </source>
</evidence>
<evidence type="ECO:0007744" key="93">
    <source>
        <dbReference type="PDB" id="3T9V"/>
    </source>
</evidence>
<evidence type="ECO:0007744" key="94">
    <source>
        <dbReference type="PDB" id="3T9X"/>
    </source>
</evidence>
<evidence type="ECO:0007744" key="95">
    <source>
        <dbReference type="PDB" id="4U5B"/>
    </source>
</evidence>
<evidence type="ECO:0007744" key="96">
    <source>
        <dbReference type="PDB" id="4U5C"/>
    </source>
</evidence>
<evidence type="ECO:0007744" key="97">
    <source>
        <dbReference type="PDB" id="4U5D"/>
    </source>
</evidence>
<evidence type="ECO:0007744" key="98">
    <source>
        <dbReference type="PDB" id="4U5E"/>
    </source>
</evidence>
<evidence type="ECO:0007744" key="99">
    <source>
        <dbReference type="PDB" id="4U5F"/>
    </source>
</evidence>
<evidence type="ECO:0007829" key="100">
    <source>
        <dbReference type="PDB" id="2CMO"/>
    </source>
</evidence>
<evidence type="ECO:0007829" key="101">
    <source>
        <dbReference type="PDB" id="3H5V"/>
    </source>
</evidence>
<evidence type="ECO:0007829" key="102">
    <source>
        <dbReference type="PDB" id="3HSY"/>
    </source>
</evidence>
<evidence type="ECO:0007829" key="103">
    <source>
        <dbReference type="PDB" id="3O2J"/>
    </source>
</evidence>
<evidence type="ECO:0007829" key="104">
    <source>
        <dbReference type="PDB" id="4U1W"/>
    </source>
</evidence>
<evidence type="ECO:0007829" key="105">
    <source>
        <dbReference type="PDB" id="4U2P"/>
    </source>
</evidence>
<evidence type="ECO:0007829" key="106">
    <source>
        <dbReference type="PDB" id="4YU0"/>
    </source>
</evidence>
<evidence type="ECO:0007829" key="107">
    <source>
        <dbReference type="PDB" id="5FWY"/>
    </source>
</evidence>
<evidence type="ECO:0007829" key="108">
    <source>
        <dbReference type="PDB" id="5N6P"/>
    </source>
</evidence>
<evidence type="ECO:0007829" key="109">
    <source>
        <dbReference type="PDB" id="6FQI"/>
    </source>
</evidence>
<evidence type="ECO:0007829" key="110">
    <source>
        <dbReference type="PDB" id="6U5S"/>
    </source>
</evidence>
<evidence type="ECO:0007829" key="111">
    <source>
        <dbReference type="PDB" id="6UCB"/>
    </source>
</evidence>
<evidence type="ECO:0007829" key="112">
    <source>
        <dbReference type="PDB" id="6UD8"/>
    </source>
</evidence>
<evidence type="ECO:0007829" key="113">
    <source>
        <dbReference type="PDB" id="6YK4"/>
    </source>
</evidence>
<evidence type="ECO:0007829" key="114">
    <source>
        <dbReference type="PDB" id="8AYO"/>
    </source>
</evidence>
<evidence type="ECO:0007829" key="115">
    <source>
        <dbReference type="PDB" id="8FPC"/>
    </source>
</evidence>
<evidence type="ECO:0007829" key="116">
    <source>
        <dbReference type="PDB" id="8FQF"/>
    </source>
</evidence>
<evidence type="ECO:0007829" key="117">
    <source>
        <dbReference type="PDB" id="8SS6"/>
    </source>
</evidence>
<name>GRIA2_RAT</name>
<keyword id="KW-0002">3D-structure</keyword>
<keyword id="KW-0025">Alternative splicing</keyword>
<keyword id="KW-1003">Cell membrane</keyword>
<keyword id="KW-1015">Disulfide bond</keyword>
<keyword id="KW-0325">Glycoprotein</keyword>
<keyword id="KW-0407">Ion channel</keyword>
<keyword id="KW-0406">Ion transport</keyword>
<keyword id="KW-1071">Ligand-gated ion channel</keyword>
<keyword id="KW-0449">Lipoprotein</keyword>
<keyword id="KW-0472">Membrane</keyword>
<keyword id="KW-0564">Palmitate</keyword>
<keyword id="KW-0597">Phosphoprotein</keyword>
<keyword id="KW-0628">Postsynaptic cell membrane</keyword>
<keyword id="KW-0675">Receptor</keyword>
<keyword id="KW-1185">Reference proteome</keyword>
<keyword id="KW-0691">RNA editing</keyword>
<keyword id="KW-0732">Signal</keyword>
<keyword id="KW-0770">Synapse</keyword>
<keyword id="KW-0812">Transmembrane</keyword>
<keyword id="KW-1133">Transmembrane helix</keyword>
<keyword id="KW-0813">Transport</keyword>
<keyword id="KW-0832">Ubl conjugation</keyword>
<proteinExistence type="evidence at protein level"/>
<comment type="function">
    <text evidence="3 8 9 10 12 13 16 17 18 19 20 23 28 30 33 34 39">Ionotropic glutamate receptor that functions as a ligand-gated cation channel, gated by L-glutamate and glutamatergic agonists such as alpha-amino-3-hydroxy-5-methyl-4-isoxazolepropionic acid (AMPA), quisqualic acid, and kainic acid (PubMed:12015593, PubMed:12730367, PubMed:15591246, PubMed:2166337, PubMed:21846932, PubMed:9351977). L-glutamate acts as an excitatory neurotransmitter at many synapses in the central nervous system and plays an important role in fast excitatory synaptic transmission (By similarity). Binding of the excitatory neurotransmitter L-glutamate induces a conformation change, leading to the opening of the cation channel, and thereby converts the chemical signal to an electrical impulse upon entry of monovalent and divalent cations such as sodium and calcium (PubMed:11773314, PubMed:12501192, PubMed:12730367, PubMed:12872125, PubMed:16483599, PubMed:1653450, PubMed:17018279, PubMed:19946266). The receptor then desensitizes rapidly and enters in a transient inactive state, characterized by the presence of bound agonist (PubMed:12015593, PubMed:16192394, PubMed:17018279, PubMed:19946266). In the presence of CACNG4 or CACNG7 or CACNG8, shows resensitization which is characterized by a delayed accumulation of current flux upon continued application of L-glutamate (PubMed:21172611). Through complex formation with NSG1, GRIP1 and STX12 controls the intracellular fate of AMPAR and the endosomal sorting of the GRIA2 subunit toward recycling and membrane targeting (PubMed:16037816).</text>
</comment>
<comment type="catalytic activity">
    <reaction evidence="8 20">
        <text>Ca(2+)(in) = Ca(2+)(out)</text>
        <dbReference type="Rhea" id="RHEA:29671"/>
        <dbReference type="ChEBI" id="CHEBI:29108"/>
    </reaction>
</comment>
<comment type="catalytic activity">
    <reaction evidence="8 47">
        <text>Na(+)(in) = Na(+)(out)</text>
        <dbReference type="Rhea" id="RHEA:34963"/>
        <dbReference type="ChEBI" id="CHEBI:29101"/>
    </reaction>
</comment>
<comment type="subunit">
    <text evidence="2 5 6 9 10 17 19 21 22 25 26 27 28 29 31 32 36 38 40">Homotetramer or heterotetramer of pore-forming glutamate receptor subunits (PubMed:12015593, PubMed:12501192, PubMed:16483599, PubMed:19946266, PubMed:21317873). Tetramers may be formed by the dimerization of dimers (PubMed:12015593, PubMed:19946266, PubMed:21317873). May interact with MPP4 (By similarity). Forms a ternary complex with GRIP1 and CSPG4 (By similarity). Interacts with ATAD1 in an ATP-dependent manner (PubMed:21496646). ATAD1-catalyzed ATP hydrolysis disrupts binding to ATAD1 and to GRIP1 and leads to AMPAR complex disassembly (PubMed:21496646). Interacts with GRIP2 (By similarity). Interacts with GRIP1 (PubMed:9069286). Interacts with NSF via its C-terminus (PubMed:9697855). Interacts with CACNG2, PICK1 and GRIP2 (PubMed:10027300, PubMed:10414981, PubMed:16793768, PubMed:27756895). Interacts with GRIA1 and SYNDIG1 (By similarity). Part of a complex containing GRIA2, NSF and NAPA and/or NAPB (PubMed:9697855). Interacts with SNX27 (via PDZ domain); the interaction is required for recycling to the plasma membrane when endocytosed and prevent degradation in lysosomes (By similarity). Interacts with LRFN1 (PubMed:16630835). Found in a complex with GRIA1, GRIA3, GRIA4, CNIH2, CNIH3, CACNG2, CACNG3, CACNG4, CACNG5, CACNG7 and CACNG8 (PubMed:19265014). Interacts with CACNG5 (PubMed:18817736, PubMed:19234459). Interacts with OLFM2 (By similarity). Interacts with AP4B1, AP4E1 and AP4M1; probably indirect it mediates the somatodendritic localization of GRIA2 in neurons (By similarity). Forms a complex with GRIP1, NSG1 and STX12; controls the intracellular fate of AMPAR and the endosomal sorting of the GRIA2 subunit toward recycling and membrane targeting (PubMed:16037816). Interacts with IQSEC1; the interaction is required for ARF6 activation (PubMed:20547133). Interacts (heterotetramer form) with CNIH2 and CNIH3; this interaction promotes expression at the plasma membrane and extensively modulates their gating properties by slowing deactivation and desensitization kinetics (PubMed:19265014).</text>
</comment>
<comment type="interaction">
    <interactant intactId="EBI-77718">
        <id>P19491</id>
    </interactant>
    <interactant intactId="EBI-4409108">
        <id>Q8CGU4</id>
        <label>Agap2</label>
    </interactant>
    <organismsDiffer>false</organismsDiffer>
    <experiments>4</experiments>
</comment>
<comment type="interaction">
    <interactant intactId="EBI-77718">
        <id>P19491</id>
    </interactant>
    <interactant intactId="EBI-297693">
        <id>P84092</id>
        <label>Ap2m1</label>
    </interactant>
    <organismsDiffer>false</organismsDiffer>
    <experiments>2</experiments>
</comment>
<comment type="interaction">
    <interactant intactId="EBI-77718">
        <id>P19491</id>
    </interactant>
    <interactant intactId="EBI-4280289">
        <id>Q505J9</id>
        <label>Atad1</label>
    </interactant>
    <organismsDiffer>false</organismsDiffer>
    <experiments>3</experiments>
</comment>
<comment type="interaction">
    <interactant intactId="EBI-77718">
        <id>P19491</id>
    </interactant>
    <interactant intactId="EBI-8538384">
        <id>Q71RJ2</id>
        <label>Cacng2</label>
    </interactant>
    <organismsDiffer>false</organismsDiffer>
    <experiments>2</experiments>
</comment>
<comment type="interaction">
    <interactant intactId="EBI-77718">
        <id>P19491</id>
    </interactant>
    <interactant intactId="EBI-371642">
        <id>P19490</id>
        <label>Gria1</label>
    </interactant>
    <organismsDiffer>false</organismsDiffer>
    <experiments>3</experiments>
</comment>
<comment type="interaction">
    <interactant intactId="EBI-77718">
        <id>P19491</id>
    </interactant>
    <interactant intactId="EBI-77718">
        <id>P19491</id>
        <label>Gria2</label>
    </interactant>
    <organismsDiffer>false</organismsDiffer>
    <experiments>12</experiments>
</comment>
<comment type="interaction">
    <interactant intactId="EBI-77718">
        <id>P19491</id>
    </interactant>
    <interactant intactId="EBI-936113">
        <id>P97879</id>
        <label>Grip1</label>
    </interactant>
    <organismsDiffer>false</organismsDiffer>
    <experiments>15</experiments>
</comment>
<comment type="interaction">
    <interactant intactId="EBI-77718">
        <id>P19491</id>
    </interactant>
    <interactant intactId="EBI-936068">
        <id>Q9WTW1-3</id>
        <label>Grip2</label>
    </interactant>
    <organismsDiffer>false</organismsDiffer>
    <experiments>7</experiments>
</comment>
<comment type="interaction">
    <interactant intactId="EBI-77718">
        <id>P19491</id>
    </interactant>
    <interactant intactId="EBI-925794">
        <id>Q9QUL6</id>
        <label>Nsf</label>
    </interactant>
    <organismsDiffer>false</organismsDiffer>
    <experiments>5</experiments>
</comment>
<comment type="interaction">
    <interactant intactId="EBI-77718">
        <id>P19491</id>
    </interactant>
    <interactant intactId="EBI-77728">
        <id>Q9EP80</id>
        <label>Pick1</label>
    </interactant>
    <organismsDiffer>false</organismsDiffer>
    <experiments>13</experiments>
</comment>
<comment type="interaction">
    <interactant intactId="EBI-77718">
        <id>P19491</id>
    </interactant>
    <interactant intactId="EBI-8276907">
        <id>Q91Z80</id>
        <label>Ppfia4</label>
    </interactant>
    <organismsDiffer>false</organismsDiffer>
    <experiments>3</experiments>
</comment>
<comment type="interaction">
    <interactant intactId="EBI-77718">
        <id>P19491</id>
    </interactant>
    <interactant intactId="EBI-458106">
        <id>P40748</id>
        <label>Syt3</label>
    </interactant>
    <organismsDiffer>false</organismsDiffer>
    <experiments>3</experiments>
</comment>
<comment type="interaction">
    <interactant intactId="EBI-77718">
        <id>P19491</id>
    </interactant>
    <interactant intactId="EBI-745426">
        <id>Q13136</id>
        <label>PPFIA1</label>
    </interactant>
    <organismsDiffer>true</organismsDiffer>
    <experiments>2</experiments>
</comment>
<comment type="interaction">
    <interactant intactId="EBI-15817825">
        <id>P19491-2</id>
    </interactant>
    <interactant intactId="EBI-26900830">
        <id>P19490-2</id>
        <label>Gria1</label>
    </interactant>
    <organismsDiffer>false</organismsDiffer>
    <experiments>2</experiments>
</comment>
<comment type="interaction">
    <interactant intactId="EBI-15817825">
        <id>P19491-2</id>
    </interactant>
    <interactant intactId="EBI-15817825">
        <id>P19491-2</id>
        <label>Gria2</label>
    </interactant>
    <organismsDiffer>false</organismsDiffer>
    <experiments>18</experiments>
</comment>
<comment type="interaction">
    <interactant intactId="EBI-15817825">
        <id>P19491-2</id>
    </interactant>
    <interactant intactId="EBI-16201849">
        <id>P19492-2</id>
        <label>Gria3</label>
    </interactant>
    <organismsDiffer>false</organismsDiffer>
    <experiments>6</experiments>
</comment>
<comment type="interaction">
    <interactant intactId="EBI-15817825">
        <id>P19491-2</id>
    </interactant>
    <interactant intactId="EBI-15852899">
        <id>P19493-2</id>
        <label>Gria4</label>
    </interactant>
    <organismsDiffer>false</organismsDiffer>
    <experiments>2</experiments>
</comment>
<comment type="interaction">
    <interactant intactId="EBI-15817825">
        <id>P19491-2</id>
    </interactant>
    <interactant intactId="EBI-16116011">
        <id>P0CB20</id>
    </interactant>
    <organismsDiffer>true</organismsDiffer>
    <experiments>2</experiments>
</comment>
<comment type="interaction">
    <interactant intactId="EBI-9118256">
        <id>P19491-3</id>
    </interactant>
    <interactant intactId="EBI-7456505">
        <id>P49185</id>
        <label>Mapk8</label>
    </interactant>
    <organismsDiffer>false</organismsDiffer>
    <experiments>2</experiments>
</comment>
<comment type="subcellular location">
    <subcellularLocation>
        <location evidence="3">Cell membrane</location>
        <topology evidence="3">Multi-pass membrane protein</topology>
    </subcellularLocation>
    <subcellularLocation>
        <location evidence="3">Postsynaptic cell membrane</location>
        <topology evidence="3">Multi-pass membrane protein</topology>
    </subcellularLocation>
    <subcellularLocation>
        <location evidence="2">Postsynaptic density membrane</location>
        <topology evidence="2">Multi-pass membrane protein</topology>
    </subcellularLocation>
    <text evidence="2 27">Interaction with CACNG2, CNIH2 and CNIH3 promotes cell surface expression (PubMed:19265014). Displays a somatodendritic localization and is excluded from axons in neurons (By similarity).</text>
</comment>
<comment type="alternative products">
    <event type="alternative splicing"/>
    <isoform>
        <id>P19491-1</id>
        <name>Flop</name>
        <sequence type="displayed"/>
    </isoform>
    <isoform>
        <id>P19491-2</id>
        <name>Flip</name>
        <sequence type="described" ref="VSP_000111 VSP_000112 VSP_000113 VSP_000114"/>
    </isoform>
    <isoform>
        <id>P19491-3</id>
        <name>3</name>
        <name>Long</name>
        <sequence type="described" ref="VSP_029310"/>
    </isoform>
</comment>
<comment type="tissue specificity">
    <text evidence="11 14 40">Detected in forebrain (PubMed:14687553). Detected in dendrites of neuronal cells (PubMed:9697855). Expressed in the pyramidal cell layers of CA1 and CA3 and in the granule cell layer of the dentate gyrus (PubMed:12657670).</text>
</comment>
<comment type="developmental stage">
    <text evidence="14">Detected at low levels in newborns. Levels increase strongly and are highest in hippocampus from 8 to 14 day old animals. Detected at intermediate levels at day 42 (at protein level).</text>
</comment>
<comment type="induction">
    <text evidence="11">Down-regulated in the pyramidal cell layer of CA1 in the hippocampus by global ischemia.</text>
</comment>
<comment type="domain">
    <text evidence="3">The M4 transmembrane segment mediates tetramerization and is required for cell surface expression.</text>
</comment>
<comment type="PTM">
    <text evidence="2">Palmitoylated (By similarity). Depalmitoylated upon L-glutamate stimulation (By similarity). Cys-610 palmitoylation leads to Golgi retention and decreased cell surface expression (By similarity). In contrast, Cys-836 palmitoylation does not affect cell surface expression but regulates stimulation-dependent endocytosis (By similarity).</text>
</comment>
<comment type="PTM">
    <text evidence="29">Phosphorylation at Tyr-876 is required for interaction with IQSEC1 and ARF6 activation, which in turn triggers AMPAR internalization for persistent synaptic depression.</text>
</comment>
<comment type="PTM">
    <text evidence="3">Ubiquitinated by RNF167, leading to its degradation.</text>
</comment>
<comment type="PTM">
    <text evidence="2">N-glycosylated.</text>
</comment>
<comment type="RNA editing">
    <location>
        <position position="607" evidence="24"/>
    </location>
    <text evidence="3">Fully edited in the brain (By similarity). Heteromerically expressed edited GLUR2 (R) receptor complexes are impermeable to calcium, whereas the unedited (Q) forms are highly permeable to divalent ions (By similarity).</text>
</comment>
<comment type="miscellaneous">
    <text evidence="48">The postsynaptic actions of L-glutamate are mediated by a variety of receptors that are named according to their selective agonists (Probable). This receptor binds AMPA (quisqualate) &gt; L-glutamate &gt; kainate (Probable).</text>
</comment>
<comment type="similarity">
    <text evidence="46">Belongs to the glutamate-gated ion channel (TC 1.A.10.1) family. GRIA2 subfamily.</text>
</comment>
<gene>
    <name evidence="49" type="primary">Gria2</name>
    <name evidence="42 44" type="synonym">GluA2</name>
    <name type="synonym">Glur2</name>
</gene>
<reference key="1">
    <citation type="journal article" date="1990" name="Science">
        <title>A family of AMPA-selective glutamate receptors.</title>
        <authorList>
            <person name="Keinaenen K."/>
            <person name="Wisden W."/>
            <person name="Sommer B."/>
            <person name="Werner P."/>
            <person name="Herb A."/>
            <person name="Verdoorn T.A."/>
            <person name="Sakmann B."/>
            <person name="Seeburg P.H."/>
        </authorList>
    </citation>
    <scope>NUCLEOTIDE SEQUENCE [MRNA] (ISOFORMS FLIP AND FLOP)</scope>
    <scope>FUNCTION</scope>
    <source>
        <tissue>Brain</tissue>
    </source>
</reference>
<reference key="2">
    <citation type="journal article" date="1990" name="Science">
        <title>Molecular cloning and functional expression of glutamate receptor subunit genes.</title>
        <authorList>
            <person name="Boulter J."/>
            <person name="Hollmann M."/>
            <person name="O'Shea-Greenfield A."/>
            <person name="Hartley M."/>
            <person name="Deneris E.S."/>
            <person name="Maron C."/>
            <person name="Heinemann S.F."/>
        </authorList>
    </citation>
    <scope>NUCLEOTIDE SEQUENCE [MRNA] (ISOFORM FLOP)</scope>
</reference>
<reference key="3">
    <citation type="journal article" date="1990" name="Neuron">
        <title>A family of glutamate receptor genes: evidence for the formation of heteromultimeric receptors with distinct channel properties.</title>
        <authorList>
            <person name="Nakanishi N."/>
            <person name="Schneider N.A."/>
            <person name="Axel R."/>
        </authorList>
    </citation>
    <scope>NUCLEOTIDE SEQUENCE [MRNA] (ISOFORM FLIP)</scope>
    <source>
        <tissue>Brain cortex</tissue>
        <tissue>Hippocampus</tissue>
    </source>
</reference>
<reference key="4">
    <citation type="journal article" date="1997" name="Mol. Pharmacol.">
        <title>N-glycosylation is not a prerequisite for glutamate receptor function but is essential for lectin modulation.</title>
        <authorList>
            <person name="Everts I."/>
            <person name="Villmann C."/>
            <person name="Hollmann M."/>
        </authorList>
    </citation>
    <scope>NUCLEOTIDE SEQUENCE [MRNA] (ISOFORM FLIP)</scope>
    <scope>FUNCTION</scope>
    <source>
        <strain>Sprague-Dawley</strain>
    </source>
</reference>
<reference key="5">
    <citation type="journal article" date="1991" name="Cell">
        <title>RNA editing in brain controls a determinant of ion flow in glutamate-gated channels.</title>
        <authorList>
            <person name="Sommer B."/>
            <person name="Koehler M."/>
            <person name="Sprengel R."/>
            <person name="Seeburg P.H."/>
        </authorList>
    </citation>
    <scope>RNA EDITING OF POSITION 607</scope>
</reference>
<reference key="6">
    <citation type="journal article" date="1991" name="Science">
        <title>Identification of a site in glutamate receptor subunits that controls calcium permeability.</title>
        <authorList>
            <person name="Hume R.I."/>
            <person name="Dingledine R."/>
            <person name="Heinemann S.F."/>
        </authorList>
    </citation>
    <scope>FUNCTION</scope>
    <scope>CATALYTIC ACTIVITY</scope>
</reference>
<reference key="7">
    <citation type="journal article" date="1998" name="Neuron">
        <title>The AMPA receptor GluR2 C terminus can mediate a reversible, ATP-dependent interaction with NSF and alpha- and beta-SNAPs.</title>
        <authorList>
            <person name="Osten P."/>
            <person name="Srivastava S."/>
            <person name="Inman G.J."/>
            <person name="Vilim F.S."/>
            <person name="Khatri L."/>
            <person name="Lee L.M."/>
            <person name="States B.A."/>
            <person name="Einheber S."/>
            <person name="Milner T.A."/>
            <person name="Hanson P.I."/>
            <person name="Ziff E.B."/>
        </authorList>
    </citation>
    <scope>SUBCELLULAR LOCATION</scope>
    <scope>TISSUE SPECIFICITY</scope>
    <scope>INTERACTION WITH NSF</scope>
    <scope>IDENTIFICATION IN A COMPLEX WITH NSF; NAPA AND NAPB</scope>
    <scope>MUTAGENESIS OF 851-ASN-PRO-852</scope>
</reference>
<reference key="8">
    <citation type="journal article" date="1999" name="Neuron">
        <title>Clustering of AMPA receptors by the synaptic PDZ domain-containing protein PICK1.</title>
        <authorList>
            <person name="Xia J."/>
            <person name="Zhang X."/>
            <person name="Staudinger J."/>
            <person name="Huganir R.L."/>
        </authorList>
    </citation>
    <scope>INTERACTION WITH PICK1</scope>
</reference>
<reference key="9">
    <citation type="journal article" date="1990" name="Science">
        <title>Flip and flop: a cell-specific functional switch in glutamate-operated channels of the CNS.</title>
        <authorList>
            <person name="Sommer B."/>
            <person name="Keinaenen K."/>
            <person name="Verdoorn T.A."/>
            <person name="Wisden W."/>
            <person name="Burnashev N."/>
            <person name="Herb A."/>
            <person name="Koehler M."/>
            <person name="Takagi T."/>
            <person name="Sakmann B."/>
            <person name="Seeburg P.H."/>
        </authorList>
    </citation>
    <scope>ALTERNATIVE SPLICING (ISOFORMS FLIP AND FLOP)</scope>
</reference>
<reference key="10">
    <citation type="journal article" date="1995" name="Neurosci. Res.">
        <title>Antibody specific for phosphorylated AMPA-type glutamate receptors at GluR2 Ser-696.</title>
        <authorList>
            <person name="Nakazawa K."/>
            <person name="Tadakuma T."/>
            <person name="Nokihara K."/>
            <person name="Ito M."/>
        </authorList>
    </citation>
    <scope>PHOSPHORYLATION AT SER-683 AND SER-717</scope>
</reference>
<reference key="11">
    <citation type="journal article" date="1997" name="Nature">
        <title>GRIP: a synaptic PDZ domain-containing protein that interacts with AMPA receptors.</title>
        <authorList>
            <person name="Dong H."/>
            <person name="O'Brien R.J."/>
            <person name="Fung E.T."/>
            <person name="Lanahan A.A."/>
            <person name="Worley P.F."/>
            <person name="Huganir R.L."/>
        </authorList>
    </citation>
    <scope>INTERACTION WITH GRIP1</scope>
    <source>
        <tissue>Hippocampus</tissue>
    </source>
</reference>
<reference key="12">
    <citation type="journal article" date="1999" name="J. Neurosci.">
        <title>Association of AMPA receptors with a subset of glutamate receptor-interacting protein in vivo.</title>
        <authorList>
            <person name="Wyszynski M."/>
            <person name="Valtschanoff J.G."/>
            <person name="Naisbitt S."/>
            <person name="Dunah A.W."/>
            <person name="Kim E."/>
            <person name="Standaert D.G."/>
            <person name="Weinberg R."/>
            <person name="Sheng M."/>
        </authorList>
    </citation>
    <scope>INTERACTION WITH GRIP2</scope>
</reference>
<reference key="13">
    <citation type="journal article" date="2002" name="J. Physiol. (Lond.)">
        <title>Voltage and concentration dependence of Ca(2+) permeability in recombinant glutamate receptor subtypes.</title>
        <authorList>
            <person name="Jatzke C."/>
            <person name="Watanabe J."/>
            <person name="Wollmuth L.P."/>
        </authorList>
    </citation>
    <scope>FUNCTION</scope>
    <scope>CATALYTIC ACTIVITY</scope>
</reference>
<reference key="14">
    <citation type="journal article" date="2003" name="J. Neurosci.">
        <title>Ischemic insults derepress the gene silencer REST in neurons destined to die.</title>
        <authorList>
            <person name="Calderone A."/>
            <person name="Jover T."/>
            <person name="Noh K.M."/>
            <person name="Tanaka H."/>
            <person name="Yokota H."/>
            <person name="Lin Y."/>
            <person name="Grooms S.Y."/>
            <person name="Regis R."/>
            <person name="Bennett M.V."/>
            <person name="Zukin R.S."/>
        </authorList>
    </citation>
    <scope>TISSUE SPECIFICITY</scope>
    <scope>INDUCTION</scope>
</reference>
<reference key="15">
    <citation type="journal article" date="2003" name="Neuron">
        <title>Glutamatergic plasticity by synaptic delivery of GluR-B(long)-containing AMPA receptors.</title>
        <authorList>
            <person name="Kolleker A."/>
            <person name="Zhu J.J."/>
            <person name="Schupp B.J."/>
            <person name="Qin Y."/>
            <person name="Mack V."/>
            <person name="Borchardt T."/>
            <person name="Koehr G."/>
            <person name="Malinow R."/>
            <person name="Seeburg P.H."/>
            <person name="Osten P."/>
        </authorList>
    </citation>
    <scope>IDENTIFICATION OF ISOFORM 3</scope>
    <scope>SUBCELLULAR LOCATION</scope>
    <scope>TISSUE SPECIFICITY</scope>
    <scope>DEVELOPMENTAL STAGE</scope>
</reference>
<reference key="16">
    <citation type="journal article" date="2004" name="J. Neurosci.">
        <title>Tyrosine phosphorylation and regulation of the AMPA receptor by SRC family tyrosine kinases.</title>
        <authorList>
            <person name="Hayashi T."/>
            <person name="Huganir R.L."/>
        </authorList>
    </citation>
    <scope>PHOSPHORYLATION AT TYR-876</scope>
</reference>
<reference key="17">
    <citation type="journal article" date="2005" name="EMBO J.">
        <title>Interactions between NEEP21, GRIP1 and GluR2 regulate sorting and recycling of the glutamate receptor subunit GluR2.</title>
        <authorList>
            <person name="Steiner P."/>
            <person name="Alberi S."/>
            <person name="Kulangara K."/>
            <person name="Yersin A."/>
            <person name="Sarria J.C."/>
            <person name="Regulier E."/>
            <person name="Kasas S."/>
            <person name="Dietler G."/>
            <person name="Muller D."/>
            <person name="Catsicas S."/>
            <person name="Hirling H."/>
        </authorList>
    </citation>
    <scope>COMPLEX FORMATION WITH GRIP1; NGS1 AND STX12</scope>
    <scope>FUNCTION</scope>
</reference>
<reference key="18">
    <citation type="journal article" date="2006" name="J. Biol. Chem.">
        <title>Different domains of the AMPA receptor direct stargazin-mediated trafficking and stargazin-mediated modulation of kinetics.</title>
        <authorList>
            <person name="Bedoukian M.A."/>
            <person name="Weeks A.M."/>
            <person name="Partin K.M."/>
        </authorList>
    </citation>
    <scope>SUBCELLULAR LOCATION</scope>
    <scope>INTERACTION WITH CACNG2</scope>
</reference>
<reference key="19">
    <citation type="journal article" date="2006" name="Neuron">
        <title>SALM synaptic cell adhesion-like molecules regulate the differentiation of excitatory synapses.</title>
        <authorList>
            <person name="Ko J."/>
            <person name="Kim S."/>
            <person name="Chung H.S."/>
            <person name="Kim K."/>
            <person name="Han K."/>
            <person name="Kim H."/>
            <person name="Jun H."/>
            <person name="Kaang B.-K."/>
            <person name="Kim E."/>
        </authorList>
    </citation>
    <scope>INTERACTION WITH LRFN1</scope>
</reference>
<reference key="20">
    <citation type="journal article" date="2008" name="Neuron">
        <title>AMPA receptor subunit-specific regulation by a distinct family of type II TARPs.</title>
        <authorList>
            <person name="Kato A.S."/>
            <person name="Siuda E.R."/>
            <person name="Nisenbaum E.S."/>
            <person name="Bredt D.S."/>
        </authorList>
    </citation>
    <scope>INTERACTION WITH CACNG5</scope>
</reference>
<reference key="21">
    <citation type="journal article" date="2009" name="Nat. Neurosci.">
        <title>Selective regulation of long-form calcium-permeable AMPA receptors by an atypical TARP, gamma-5.</title>
        <authorList>
            <person name="Soto D."/>
            <person name="Coombs I.D."/>
            <person name="Renzi M."/>
            <person name="Zonouzi M."/>
            <person name="Farrant M."/>
            <person name="Cull-Candy S.G."/>
        </authorList>
    </citation>
    <scope>INTERACTION WITH CACNG5</scope>
</reference>
<reference key="22">
    <citation type="journal article" date="2009" name="Nat. Neurosci.">
        <authorList>
            <person name="Soto D."/>
            <person name="Coombs I.D."/>
            <person name="Renzi M."/>
            <person name="Zonouzi M."/>
            <person name="Farrant M."/>
            <person name="Cull-Candy S.G."/>
        </authorList>
    </citation>
    <scope>ERRATUM OF PUBMED:19234459</scope>
</reference>
<reference key="23">
    <citation type="journal article" date="2009" name="Science">
        <title>Functional proteomics identify cornichon proteins as auxiliary subunits of AMPA receptors.</title>
        <authorList>
            <person name="Schwenk J."/>
            <person name="Harmel N."/>
            <person name="Zolles G."/>
            <person name="Bildl W."/>
            <person name="Kulik A."/>
            <person name="Heimrich B."/>
            <person name="Chisaka O."/>
            <person name="Jonas P."/>
            <person name="Schulte U."/>
            <person name="Fakler B."/>
            <person name="Kloecker N."/>
        </authorList>
    </citation>
    <scope>SUBUNIT</scope>
    <scope>SUBCELLULAR LOCATION</scope>
    <scope>IDENTIFICATION BY MASS SPECTROMETRY</scope>
</reference>
<reference key="24">
    <citation type="journal article" date="2010" name="Neuron">
        <title>AMPA receptor signaling through BRAG2 and Arf6 critical for long-term synaptic depression.</title>
        <authorList>
            <person name="Scholz R."/>
            <person name="Berberich S."/>
            <person name="Rathgeber L."/>
            <person name="Kolleker A."/>
            <person name="Koehr G."/>
            <person name="Kornau H.C."/>
        </authorList>
    </citation>
    <scope>INTERACTION WITH IQSEC1</scope>
    <scope>MUTAGENESIS OF VAL-875 AND TYR-876</scope>
    <scope>PHOSPHORYLATION AT TYR-876</scope>
</reference>
<reference key="25">
    <citation type="journal article" date="2010" name="Neuron">
        <title>Hippocampal AMPA receptor gating controlled by both TARP and cornichon proteins.</title>
        <authorList>
            <person name="Kato A.S."/>
            <person name="Gill M.B."/>
            <person name="Ho M.T."/>
            <person name="Yu H."/>
            <person name="Tu Y."/>
            <person name="Siuda E.R."/>
            <person name="Wang H."/>
            <person name="Qian Y.W."/>
            <person name="Nisenbaum E.S."/>
            <person name="Tomita S."/>
            <person name="Bredt D.S."/>
        </authorList>
    </citation>
    <scope>FUNCTION</scope>
</reference>
<reference key="26">
    <citation type="journal article" date="2011" name="Cell">
        <title>The AAA+ ATPase Thorase regulates AMPA receptor-dependent synaptic plasticity and behavior.</title>
        <authorList>
            <person name="Zhang J."/>
            <person name="Wang Y."/>
            <person name="Chi Z."/>
            <person name="Keuss M.J."/>
            <person name="Pai Y.M."/>
            <person name="Kang H.C."/>
            <person name="Shin J.H."/>
            <person name="Bugayenko A."/>
            <person name="Wang H."/>
            <person name="Xiong Y."/>
            <person name="Pletnikov M.V."/>
            <person name="Mattson M.P."/>
            <person name="Dawson T.M."/>
            <person name="Dawson V.L."/>
        </authorList>
    </citation>
    <scope>INTERACTION WITH ATAD1 AND GRIP1</scope>
</reference>
<reference key="27">
    <citation type="journal article" date="2016" name="Sci. Rep.">
        <title>MPP2 is a postsynaptic MAGUK scaffold protein that links SynCAM1 cell adhesion molecules to core components of the postsynaptic density.</title>
        <authorList>
            <person name="Rademacher N."/>
            <person name="Schmerl B."/>
            <person name="Lardong J.A."/>
            <person name="Wahl M.C."/>
            <person name="Shoichet S.A."/>
        </authorList>
    </citation>
    <scope>INTERACTION WITH CACNG2</scope>
</reference>
<reference evidence="56" key="28">
    <citation type="journal article" date="1998" name="Nature">
        <title>Structure of a glutamate-receptor ligand-binding core in complex with kainate.</title>
        <authorList>
            <person name="Armstrong N."/>
            <person name="Sun Y."/>
            <person name="Chen G.Q."/>
            <person name="Gouaux E."/>
        </authorList>
    </citation>
    <scope>X-RAY CRYSTALLOGRAPHY (1.9 ANGSTROMS) OF 404-796 IN COMPLEX WITH KAINATE</scope>
</reference>
<reference evidence="50 51 52 53 54 55" key="29">
    <citation type="journal article" date="2000" name="Neuron">
        <title>Mechanisms for activation and antagonism of an AMPA-sensitive glutamate receptor: crystal structures of the GluR2 ligand binding core.</title>
        <authorList>
            <person name="Armstrong N."/>
            <person name="Gouaux E."/>
        </authorList>
    </citation>
    <scope>X-RAY CRYSTALLOGRAPHY (1.6 ANGSTROMS) OF 413-796 IN COMPLEXES WITH L-GLUTAMATE; AMPA; KAINATE; DNQX AND ZINC</scope>
</reference>
<reference evidence="66 67" key="30">
    <citation type="journal article" date="2002" name="Biochemistry">
        <title>Mechanism of activation and selectivity in a ligand-gated ion channel: structural and functional studies of GluR2 and quisqualate.</title>
        <authorList>
            <person name="Jin R."/>
            <person name="Horning M."/>
            <person name="Mayer M.L."/>
            <person name="Gouaux E."/>
        </authorList>
    </citation>
    <scope>X-RAY CRYSTALLOGRAPHY (1.65 ANGSTROMS) OF 413-796 IN COMPLEX WITH QUISQUALATE</scope>
    <scope>FUNCTION</scope>
    <scope>SUBUNIT</scope>
</reference>
<reference evidence="61 62 63 64 65" key="31">
    <citation type="journal article" date="2002" name="J. Mol. Biol.">
        <title>Structural basis for AMPA receptor activation and ligand selectivity: crystal structures of five agonist complexes with the GluR2 ligand-binding core.</title>
        <authorList>
            <person name="Hogner A."/>
            <person name="Kastrup J.S."/>
            <person name="Jin R."/>
            <person name="Liljefors T."/>
            <person name="Mayer M.L."/>
            <person name="Egebjerg J."/>
            <person name="Larsen I.K."/>
            <person name="Gouaux E."/>
        </authorList>
    </citation>
    <scope>X-RAY CRYSTALLOGRAPHY (1.46 ANGSTROMS) OF 413-796 IN COMPLEXES WITH ACPA AND BR-HIBO</scope>
</reference>
<reference evidence="57 58 59 60" key="32">
    <citation type="journal article" date="2002" name="Nature">
        <title>Mechanism of glutamate receptor desensitization.</title>
        <authorList>
            <person name="Sun Y."/>
            <person name="Olson R."/>
            <person name="Horning M."/>
            <person name="Armstrong N."/>
            <person name="Mayer M."/>
            <person name="Gouaux E."/>
        </authorList>
    </citation>
    <scope>X-RAY CRYSTALLOGRAPHY (1.8 ANGSTROMS) OF 413-796 IN COMPLEXES WITH AMPA; DNQX AND KAINATE</scope>
    <scope>FUNCTION</scope>
    <scope>SUBUNIT</scope>
    <scope>MUTAGENESIS OF LEU-504 AND ASN-775</scope>
</reference>
<reference evidence="72 73" key="33">
    <citation type="journal article" date="2003" name="J. Med. Chem.">
        <title>Three-dimensional structure of the ligand-binding core of GluR2 in complex with the agonist (S)-ATPA: implications for receptor subunit selectivity.</title>
        <authorList>
            <person name="Lunn M.-L."/>
            <person name="Hogner A."/>
            <person name="Stensboel T.B."/>
            <person name="Gouaux E."/>
            <person name="Egebjerg J."/>
            <person name="Kastrup J.S."/>
        </authorList>
    </citation>
    <scope>X-RAY CRYSTALLOGRAPHY (1.85 ANGSTROMS) OF 413-796 IN COMPLEXES WITH ATPA AND ZINC IONS</scope>
</reference>
<reference evidence="68 69 70 71" key="34">
    <citation type="journal article" date="2003" name="Nat. Neurosci.">
        <title>Structural basis for partial agonist action at ionotropic glutamate receptors.</title>
        <authorList>
            <person name="Jin R."/>
            <person name="Banke T.G."/>
            <person name="Mayer M.L."/>
            <person name="Traynelis S.F."/>
            <person name="Gouaux E."/>
        </authorList>
    </citation>
    <scope>X-RAY CRYSTALLOGRAPHY (1.35 ANGSTROMS) OF 413-796 IN COMPLEXES WITH WILLARDIINES</scope>
    <scope>FUNCTION</scope>
</reference>
<reference evidence="74 75 76 77 78" key="35">
    <citation type="journal article" date="2003" name="Proc. Natl. Acad. Sci. U.S.A.">
        <title>Tuning activation of the AMPA-sensitive GluR2 ion channel by genetic adjustment of agonist-induced conformational changes.</title>
        <authorList>
            <person name="Armstrong N."/>
            <person name="Mayer M."/>
            <person name="Gouaux E."/>
        </authorList>
    </citation>
    <scope>X-RAY CRYSTALLOGRAPHY (1.60 ANGSTROMS) OF 413-796 IN COMPLEXES WITH AMPA; KAINATE AND QUISQUALATE</scope>
    <scope>FUNCTION</scope>
</reference>
<reference key="36">
    <citation type="journal article" date="2005" name="J. Neurosci.">
        <title>Mechanism of positive allosteric modulators acting on AMPA receptors.</title>
        <authorList>
            <person name="Jin R."/>
            <person name="Clark S."/>
            <person name="Weeks A.M."/>
            <person name="Dudman J.T."/>
            <person name="Gouaux E."/>
            <person name="Partin K.M."/>
        </authorList>
    </citation>
    <scope>X-RAY CRYSTALLOGRAPHY (1.65 ANGSTROMS) OF 413-796 IN COMPLEXES WITH ANIRACETAM AND CX614</scope>
    <scope>FUNCTION</scope>
</reference>
<reference evidence="79 80" key="37">
    <citation type="journal article" date="2005" name="Mol. Pharmacol.">
        <title>Tyr702 is an important determinant of agonist binding and domain closure of the ligand-binding core of GluR2.</title>
        <authorList>
            <person name="Frandsen A."/>
            <person name="Pickering D.S."/>
            <person name="Vestergaard B."/>
            <person name="Kasper C."/>
            <person name="Nielsen B.B."/>
            <person name="Greenwood J.R."/>
            <person name="Campiani G."/>
            <person name="Fattorusso C."/>
            <person name="Gajhede M."/>
            <person name="Schousboe A."/>
            <person name="Kastrup J.S."/>
        </authorList>
    </citation>
    <scope>X-RAY CRYSTALLOGRAPHY (1.80 ANGSTROMS) OF 413-796 IN COMPLEXES WITH CPW399 AND KAINATE</scope>
    <scope>FUNCTION</scope>
</reference>
<reference evidence="82 83" key="38">
    <citation type="journal article" date="2006" name="Cell">
        <title>Measurement of conformational changes accompanying desensitization in an ionotropic glutamate receptor.</title>
        <authorList>
            <person name="Armstrong N."/>
            <person name="Jasti J."/>
            <person name="Beich-Frandsen M."/>
            <person name="Gouaux E."/>
        </authorList>
    </citation>
    <scope>X-RAY CRYSTALLOGRAPHY (2.3 ANGSTROMS) OF 413-794</scope>
    <scope>FUNCTION</scope>
    <scope>IDENTIFICATION BY MASS SPECTROMETRY</scope>
</reference>
<reference evidence="81" key="39">
    <citation type="journal article" date="2006" name="J. Mol. Biol.">
        <title>The structure of a mixed GluR2 ligand-binding core dimer in complex with (S)-glutamate and the antagonist (S)-NS1209.</title>
        <authorList>
            <person name="Kasper C."/>
            <person name="Pickering D.S."/>
            <person name="Mirza O."/>
            <person name="Olsen L."/>
            <person name="Kristensen A.S."/>
            <person name="Greenwood J.R."/>
            <person name="Liljefors T."/>
            <person name="Schousboe A."/>
            <person name="Waetjen F."/>
            <person name="Gajhede M."/>
            <person name="Sigurskjold B.W."/>
            <person name="Kastrup J.S."/>
        </authorList>
    </citation>
    <scope>X-RAY CRYSTALLOGRAPHY (2.65 ANGSTROMS) OF 413-796 IN COMPLEX WITH L-GLUTAMATE AND S1209</scope>
    <scope>FUNCTION</scope>
</reference>
<reference evidence="85 86" key="40">
    <citation type="journal article" date="2009" name="Nature">
        <title>X-ray structure, symmetry and mechanism of an AMPA-subtype glutamate receptor.</title>
        <authorList>
            <person name="Sobolevsky A.I."/>
            <person name="Rosconi M.P."/>
            <person name="Gouaux E."/>
        </authorList>
    </citation>
    <scope>X-RAY CRYSTALLOGRAPHY (3.6 ANGSTROMS) OF 25-847 IN COMPLEX WITH L-GLUTAMATE ANALOG</scope>
    <scope>X-RAY CRYSTALLOGRAPHY (1.55 ANGSTROMS) OF 413-796</scope>
    <scope>FUNCTION</scope>
    <scope>SUBUNIT</scope>
    <scope>MEMBRANE TOPOLOGY</scope>
    <scope>GLYCOSYLATION AT ASN-370</scope>
</reference>
<reference evidence="84 87 88" key="41">
    <citation type="journal article" date="2011" name="EMBO J.">
        <title>Subunit-selective N-terminal domain associations organize the formation of AMPA receptor heteromers.</title>
        <authorList>
            <person name="Rossmann M."/>
            <person name="Sukumaran M."/>
            <person name="Penn A.C."/>
            <person name="Veprintsev D.B."/>
            <person name="Babu M.M."/>
            <person name="Greger I.H."/>
        </authorList>
    </citation>
    <scope>X-RAY CRYSTALLOGRAPHY (1.75 ANGSTROMS) OF 25-400</scope>
    <scope>SUBUNIT</scope>
    <scope>DISULFIDE BOND</scope>
    <scope>GLYCOSYLATION AT ASN-256 AND ASN-370</scope>
</reference>
<reference evidence="89 90 91 92 93 94" key="42">
    <citation type="journal article" date="2011" name="J. Biol. Chem.">
        <title>Mechanism of AMPA receptor activation by partial agonists: disulfide trapping of closed lobe conformations.</title>
        <authorList>
            <person name="Ahmed A.H."/>
            <person name="Wang S."/>
            <person name="Chuang H.H."/>
            <person name="Oswald R.E."/>
        </authorList>
    </citation>
    <scope>X-RAY CRYSTALLOGRAPHY (1.82 ANGSTROMS) OF 414-794 IN COMPLEXES WITH L-GLUTAMATE; IODOWILLARDIINE AND KAINATE</scope>
    <scope>FUNCTION</scope>
    <scope>DISULFIDE BONDS</scope>
</reference>
<reference evidence="95 96 97 98 99" key="43">
    <citation type="journal article" date="2014" name="Science">
        <title>X-ray structures of AMPA receptor-cone snail toxin complexes illuminate activation mechanism.</title>
        <authorList>
            <person name="Chen L."/>
            <person name="Durr K.L."/>
            <person name="Gouaux E."/>
        </authorList>
    </citation>
    <scope>X-RAY CRYSTALLOGRAPHY (3.50 ANGSTROMS) OF 25-850 IN COMPLEXES WITH KAINATE; FLUORAWILLARDINE AND THE CONE SNAIL TOXIN CON-IKOT-IKOT</scope>
    <scope>DISULFIDE BOND</scope>
    <scope>GLYCOSYLATION AT ASN-370</scope>
    <scope>SITES ARG-474; ILE-654; ARG-681 AND LYS-773</scope>
</reference>
<sequence length="883" mass="98688">MQKIMHISVLLSPVLWGLIFGVSSNSIQIGGLFPRGADQEYSAFRVGMVQFSTSEFRLTPHIDNLEVANSFAVTNAFCSQFSRGVYAIFGFYDKKSVNTITSFCGTLHVSFITPSFPTDGTHPFVIQMRPDLKGALLSLIEYYQWDKFAYLYDSDRGLSTLQAVLDSAAEKKWQVTAINVGNINNDKKDETYRSLFQDLELKKERRVILDCERDKVNDIVDQVITIGKHVKGYHYIIANLGFTDGDLLKIQFGGANVSGFQIVDYDDSLVSKFIERWSTLEEKEYPGAHTATIKYTSALTYDAVQVMTEAFRNLRKQRIEISRRGNAGDCLANPAVPWGQGVEIERALKQVQVEGLSGNIKFDQNGKRINYTINIMELKTNGPRKIGYWSEVDKMVVTLTELPSGNDTSGLENKTVVVTTILESPYVMMKKNHEMLEGNERYEGYCVDLAAEIAKHCGFKYKLTIVGDGKYGARDADTKIWNGMVGELVYGKADIAIAPLTITLVREEVIDFSKPFMSLGISIMIKKPQKSKPGVFSFLDPLAYEIWMCIVFAYIGVSVVLFLVSRFSPYEWHTEEFEDGRETQSSESTNEFGIFNSLWFSLGAFMQQGCDISPRSLSGRIVGGVWWFFTLIIISSYTANLAAFLTVERMVSPIESAEDLSKQTEIAYGTLDSGSTKEFFRRSKIAVFDKMWTYMRSAEPSVFVRTTAEGVARVRKSKGKYAYLLESTMNEYIEQRKPCDTMKVGGNLDSKGYGIATPKGSSLGNAVNLAVLKLNEQGLLDKLKNKWWYDKGECGSGGGDSKEKTSALSLSNVAGVFYILVGGLGLAMLVALIEFCYKSRAEAKRMKVAKNPQNINPSSSQNSQNFATYKEGYNVYGIESVKI</sequence>